<name>KPCA_HUMAN</name>
<accession>P17252</accession>
<accession>B5BU22</accession>
<accession>Q15137</accession>
<accession>Q32M72</accession>
<accession>Q96RE4</accession>
<protein>
    <recommendedName>
        <fullName>Protein kinase C alpha type</fullName>
        <shortName>PKC-A</shortName>
        <shortName>PKC-alpha</shortName>
        <ecNumber evidence="30 33">2.7.11.13</ecNumber>
    </recommendedName>
</protein>
<keyword id="KW-0002">3D-structure</keyword>
<keyword id="KW-0007">Acetylation</keyword>
<keyword id="KW-0037">Angiogenesis</keyword>
<keyword id="KW-0053">Apoptosis</keyword>
<keyword id="KW-0067">ATP-binding</keyword>
<keyword id="KW-0106">Calcium</keyword>
<keyword id="KW-0130">Cell adhesion</keyword>
<keyword id="KW-1003">Cell membrane</keyword>
<keyword id="KW-0963">Cytoplasm</keyword>
<keyword id="KW-0903">Direct protein sequencing</keyword>
<keyword id="KW-0418">Kinase</keyword>
<keyword id="KW-0472">Membrane</keyword>
<keyword id="KW-0479">Metal-binding</keyword>
<keyword id="KW-0496">Mitochondrion</keyword>
<keyword id="KW-0547">Nucleotide-binding</keyword>
<keyword id="KW-0539">Nucleus</keyword>
<keyword id="KW-0597">Phosphoprotein</keyword>
<keyword id="KW-1267">Proteomics identification</keyword>
<keyword id="KW-0656">Proto-oncogene</keyword>
<keyword id="KW-1185">Reference proteome</keyword>
<keyword id="KW-0677">Repeat</keyword>
<keyword id="KW-0723">Serine/threonine-protein kinase</keyword>
<keyword id="KW-0808">Transferase</keyword>
<keyword id="KW-0862">Zinc</keyword>
<keyword id="KW-0863">Zinc-finger</keyword>
<comment type="function">
    <text evidence="4 10 11 13 14 16 19 20 23 25 26 27 29 30 32 33 34 35 36 37">Calcium-activated, phospholipid- and diacylglycerol (DAG)-dependent serine/threonine-protein kinase that is involved in positive and negative regulation of cell proliferation, apoptosis, differentiation, migration and adhesion, tumorigenesis, cardiac hypertrophy, angiogenesis, platelet function and inflammation, by directly phosphorylating targets such as RAF1, BCL2, CSPG4, TNNT2/CTNT, or activating signaling cascade involving MAPK1/3 (ERK1/2) and RAP1GAP. Involved in cell proliferation and cell growth arrest by positive and negative regulation of the cell cycle. Can promote cell growth by phosphorylating and activating RAF1, which mediates the activation of the MAPK/ERK signaling cascade, and/or by up-regulating CDKN1A, which facilitates active cyclin-dependent kinase (CDK) complex formation in glioma cells. In intestinal cells stimulated by the phorbol ester PMA, can trigger a cell cycle arrest program which is associated with the accumulation of the hyper-phosphorylated growth-suppressive form of RB1 and induction of the CDK inhibitors CDKN1A and CDKN1B. Exhibits anti-apoptotic function in glioma cells and protects them from apoptosis by suppressing the p53/TP53-mediated activation of IGFBP3, and in leukemia cells mediates anti-apoptotic action by phosphorylating BCL2. During macrophage differentiation induced by macrophage colony-stimulating factor (CSF1), is translocated to the nucleus and is associated with macrophage development. After wounding, translocates from focal contacts to lamellipodia and participates in the modulation of desmosomal adhesion. Plays a role in cell motility by phosphorylating CSPG4, which induces association of CSPG4 with extensive lamellipodia at the cell periphery and polarization of the cell accompanied by increases in cell motility. During chemokine-induced CD4(+) T cell migration, phosphorylates CDC42-guanine exchange factor DOCK8 resulting in its dissociation from LRCH1 and the activation of GTPase CDC42 (PubMed:28028151). Is highly expressed in a number of cancer cells where it can act as a tumor promoter and is implicated in malignant phenotypes of several tumors such as gliomas and breast cancers. Negatively regulates myocardial contractility and positively regulates angiogenesis, platelet aggregation and thrombus formation in arteries. Mediates hypertrophic growth of neonatal cardiomyocytes, in part through a MAPK1/3 (ERK1/2)-dependent signaling pathway, and upon PMA treatment, is required to induce cardiomyocyte hypertrophy up to heart failure and death, by increasing protein synthesis, protein-DNA ratio and cell surface area. Regulates cardiomyocyte function by phosphorylating cardiac troponin T (TNNT2/CTNT), which induces significant reduction in actomyosin ATPase activity, myofilament calcium sensitivity and myocardial contractility. In angiogenesis, is required for full endothelial cell migration, adhesion to vitronectin (VTN), and vascular endothelial growth factor A (VEGFA)-dependent regulation of kinase activation and vascular tube formation. Involved in the stabilization of VEGFA mRNA at post-transcriptional level and mediates VEGFA-induced cell proliferation. In the regulation of calcium-induced platelet aggregation, mediates signals from the CD36/GP4 receptor for granule release, and activates the integrin heterodimer ITGA2B-ITGB3 through the RAP1GAP pathway for adhesion. During response to lipopolysaccharides (LPS), may regulate selective LPS-induced macrophage functions involved in host defense and inflammation. But in some inflammatory responses, may negatively regulate NF-kappa-B-induced genes, through IL1A-dependent induction of NF-kappa-B inhibitor alpha (NFKBIA/IKBA). Upon stimulation with 12-O-tetradecanoylphorbol-13-acetate (TPA), phosphorylates EIF4G1, which modulates EIF4G1 binding to MKNK1 and may be involved in the regulation of EIF4E phosphorylation. Phosphorylates KIT, leading to inhibition of KIT activity. Phosphorylates ATF2 which promotes cooperation between ATF2 and JUN, activating transcription. Phosphorylates SOCS2 at 'Ser-52' facilitating its ubiquitination and proteasomal degradation (By similarity). Phosphorylates KLHL3 in response to angiotensin II signaling, decreasing the interaction between KLHL3 and WNK4 (PubMed:25313067). Phosphorylates and activates LRRK1, which phosphorylates RAB proteins involved in intracellular trafficking (PubMed:36040231).</text>
</comment>
<comment type="catalytic activity">
    <reaction evidence="33">
        <text>L-seryl-[protein] + ATP = O-phospho-L-seryl-[protein] + ADP + H(+)</text>
        <dbReference type="Rhea" id="RHEA:17989"/>
        <dbReference type="Rhea" id="RHEA-COMP:9863"/>
        <dbReference type="Rhea" id="RHEA-COMP:11604"/>
        <dbReference type="ChEBI" id="CHEBI:15378"/>
        <dbReference type="ChEBI" id="CHEBI:29999"/>
        <dbReference type="ChEBI" id="CHEBI:30616"/>
        <dbReference type="ChEBI" id="CHEBI:83421"/>
        <dbReference type="ChEBI" id="CHEBI:456216"/>
        <dbReference type="EC" id="2.7.11.13"/>
    </reaction>
</comment>
<comment type="catalytic activity">
    <reaction evidence="30 33">
        <text>L-threonyl-[protein] + ATP = O-phospho-L-threonyl-[protein] + ADP + H(+)</text>
        <dbReference type="Rhea" id="RHEA:46608"/>
        <dbReference type="Rhea" id="RHEA-COMP:11060"/>
        <dbReference type="Rhea" id="RHEA-COMP:11605"/>
        <dbReference type="ChEBI" id="CHEBI:15378"/>
        <dbReference type="ChEBI" id="CHEBI:30013"/>
        <dbReference type="ChEBI" id="CHEBI:30616"/>
        <dbReference type="ChEBI" id="CHEBI:61977"/>
        <dbReference type="ChEBI" id="CHEBI:456216"/>
        <dbReference type="EC" id="2.7.11.13"/>
    </reaction>
</comment>
<comment type="cofactor">
    <cofactor evidence="5">
        <name>Ca(2+)</name>
        <dbReference type="ChEBI" id="CHEBI:29108"/>
    </cofactor>
    <text evidence="2">Binds 3 Ca(2+) ions per subunit. The ions are bound to the C2 domain.</text>
</comment>
<comment type="activity regulation">
    <text evidence="27">Classical (or conventional) PKCs (PRKCA, PRKCB and PRKCG) are activated by calcium and diacylglycerol (DAG) in the presence of phosphatidylserine. Three specific sites; Thr-497 (activation loop of the kinase domain), Thr-638 (turn motif) and Ser-657 (hydrophobic region), need to be phosphorylated for its full activation.</text>
</comment>
<comment type="subunit">
    <text evidence="2 4 15 17 19 22 31">Recruited in a circadian manner into a nuclear complex which also includes BMAL1 and RACK1 (By similarity). Interacts with ADAP1/CENTA1 (PubMed:12893243). Interacts with CSPG4 (PubMed:15504744). Binds to CAVIN2 in the presence of phosphatidylserine (By similarity). Interacts with PRKCABP/PICK1 (via PDZ domain) (PubMed:15247289). Interacts with TRIM41 (PubMed:17893151). Interacts with PARD3 (PubMed:27925688). Interacts with SOCS2 (By similarity).</text>
</comment>
<comment type="interaction">
    <interactant intactId="EBI-1383528">
        <id>P17252</id>
    </interactant>
    <interactant intactId="EBI-751746">
        <id>Q15027</id>
        <label>ACAP1</label>
    </interactant>
    <organismsDiffer>false</organismsDiffer>
    <experiments>3</experiments>
</comment>
<comment type="interaction">
    <interactant intactId="EBI-1383528">
        <id>P17252</id>
    </interactant>
    <interactant intactId="EBI-25646567">
        <id>Q06481-5</id>
        <label>APLP2</label>
    </interactant>
    <organismsDiffer>false</organismsDiffer>
    <experiments>3</experiments>
</comment>
<comment type="interaction">
    <interactant intactId="EBI-1383528">
        <id>P17252</id>
    </interactant>
    <interactant intactId="EBI-5280499">
        <id>Q66PJ3-4</id>
        <label>ARL6IP4</label>
    </interactant>
    <organismsDiffer>false</organismsDiffer>
    <experiments>3</experiments>
</comment>
<comment type="interaction">
    <interactant intactId="EBI-1383528">
        <id>P17252</id>
    </interactant>
    <interactant intactId="EBI-25884811">
        <id>Q13072</id>
        <label>BAGE</label>
    </interactant>
    <organismsDiffer>false</organismsDiffer>
    <experiments>3</experiments>
</comment>
<comment type="interaction">
    <interactant intactId="EBI-1383528">
        <id>P17252</id>
    </interactant>
    <interactant intactId="EBI-11524452">
        <id>Q8N9N5-2</id>
        <label>BANP</label>
    </interactant>
    <organismsDiffer>false</organismsDiffer>
    <experiments>3</experiments>
</comment>
<comment type="interaction">
    <interactant intactId="EBI-1383528">
        <id>P17252</id>
    </interactant>
    <interactant intactId="EBI-720151">
        <id>Q96A33</id>
        <label>CCDC47</label>
    </interactant>
    <organismsDiffer>false</organismsDiffer>
    <experiments>3</experiments>
</comment>
<comment type="interaction">
    <interactant intactId="EBI-1383528">
        <id>P17252</id>
    </interactant>
    <interactant intactId="EBI-17967022">
        <id>Q96LY2-2</id>
        <label>CCDC74B</label>
    </interactant>
    <organismsDiffer>false</organismsDiffer>
    <experiments>3</experiments>
</comment>
<comment type="interaction">
    <interactant intactId="EBI-1383528">
        <id>P17252</id>
    </interactant>
    <interactant intactId="EBI-2116369">
        <id>P15169</id>
        <label>CPN1</label>
    </interactant>
    <organismsDiffer>false</organismsDiffer>
    <experiments>3</experiments>
</comment>
<comment type="interaction">
    <interactant intactId="EBI-1383528">
        <id>P17252</id>
    </interactant>
    <interactant intactId="EBI-2874283">
        <id>P43234</id>
        <label>CTSO</label>
    </interactant>
    <organismsDiffer>false</organismsDiffer>
    <experiments>3</experiments>
</comment>
<comment type="interaction">
    <interactant intactId="EBI-1383528">
        <id>P17252</id>
    </interactant>
    <interactant intactId="EBI-724515">
        <id>O95424</id>
        <label>DEXI</label>
    </interactant>
    <organismsDiffer>false</organismsDiffer>
    <experiments>3</experiments>
</comment>
<comment type="interaction">
    <interactant intactId="EBI-1383528">
        <id>P17252</id>
    </interactant>
    <interactant intactId="EBI-748674">
        <id>O43598</id>
        <label>DNPH1</label>
    </interactant>
    <organismsDiffer>false</organismsDiffer>
    <experiments>3</experiments>
</comment>
<comment type="interaction">
    <interactant intactId="EBI-1383528">
        <id>P17252</id>
    </interactant>
    <interactant intactId="EBI-6624459">
        <id>P21728</id>
        <label>DRD1</label>
    </interactant>
    <organismsDiffer>false</organismsDiffer>
    <experiments>3</experiments>
</comment>
<comment type="interaction">
    <interactant intactId="EBI-1383528">
        <id>P17252</id>
    </interactant>
    <interactant intactId="EBI-297353">
        <id>P00533</id>
        <label>EGFR</label>
    </interactant>
    <organismsDiffer>false</organismsDiffer>
    <experiments>3</experiments>
</comment>
<comment type="interaction">
    <interactant intactId="EBI-1383528">
        <id>P17252</id>
    </interactant>
    <interactant intactId="EBI-347740">
        <id>P60228</id>
        <label>EIF3E</label>
    </interactant>
    <organismsDiffer>false</organismsDiffer>
    <experiments>3</experiments>
</comment>
<comment type="interaction">
    <interactant intactId="EBI-1383528">
        <id>P17252</id>
    </interactant>
    <interactant intactId="EBI-25885343">
        <id>Q96J88-3</id>
        <label>EPSTI1</label>
    </interactant>
    <organismsDiffer>false</organismsDiffer>
    <experiments>3</experiments>
</comment>
<comment type="interaction">
    <interactant intactId="EBI-1383528">
        <id>P17252</id>
    </interactant>
    <interactant intactId="EBI-25885364">
        <id>Q8IVH2-2</id>
        <label>FOXP4</label>
    </interactant>
    <organismsDiffer>false</organismsDiffer>
    <experiments>3</experiments>
</comment>
<comment type="interaction">
    <interactant intactId="EBI-1383528">
        <id>P17252</id>
    </interactant>
    <interactant intactId="EBI-13213391">
        <id>Q96NE9-2</id>
        <label>FRMD6</label>
    </interactant>
    <organismsDiffer>false</organismsDiffer>
    <experiments>3</experiments>
</comment>
<comment type="interaction">
    <interactant intactId="EBI-1383528">
        <id>P17252</id>
    </interactant>
    <interactant intactId="EBI-21017948">
        <id>O14926</id>
        <label>FSCN2</label>
    </interactant>
    <organismsDiffer>false</organismsDiffer>
    <experiments>3</experiments>
</comment>
<comment type="interaction">
    <interactant intactId="EBI-1383528">
        <id>P17252</id>
    </interactant>
    <interactant intactId="EBI-9088619">
        <id>Q06547-3</id>
        <label>GABPB1</label>
    </interactant>
    <organismsDiffer>false</organismsDiffer>
    <experiments>3</experiments>
</comment>
<comment type="interaction">
    <interactant intactId="EBI-1383528">
        <id>P17252</id>
    </interactant>
    <interactant intactId="EBI-21558069">
        <id>P19440-3</id>
        <label>GGT1</label>
    </interactant>
    <organismsDiffer>false</organismsDiffer>
    <experiments>3</experiments>
</comment>
<comment type="interaction">
    <interactant intactId="EBI-1383528">
        <id>P17252</id>
    </interactant>
    <interactant intactId="EBI-25885139">
        <id>Q9UJ42</id>
        <label>GPR160</label>
    </interactant>
    <organismsDiffer>false</organismsDiffer>
    <experiments>3</experiments>
</comment>
<comment type="interaction">
    <interactant intactId="EBI-1383528">
        <id>P17252</id>
    </interactant>
    <interactant intactId="EBI-302023">
        <id>P62805</id>
        <label>H4C9</label>
    </interactant>
    <organismsDiffer>false</organismsDiffer>
    <experiments>3</experiments>
</comment>
<comment type="interaction">
    <interactant intactId="EBI-1383528">
        <id>P17252</id>
    </interactant>
    <interactant intactId="EBI-301697">
        <id>Q9UBN7</id>
        <label>HDAC6</label>
    </interactant>
    <organismsDiffer>false</organismsDiffer>
    <experiments>2</experiments>
</comment>
<comment type="interaction">
    <interactant intactId="EBI-1383528">
        <id>P17252</id>
    </interactant>
    <interactant intactId="EBI-352986">
        <id>P52597</id>
        <label>HNRNPF</label>
    </interactant>
    <organismsDiffer>false</organismsDiffer>
    <experiments>3</experiments>
</comment>
<comment type="interaction">
    <interactant intactId="EBI-1383528">
        <id>P17252</id>
    </interactant>
    <interactant intactId="EBI-11317274">
        <id>Q92826</id>
        <label>HOXB13</label>
    </interactant>
    <organismsDiffer>false</organismsDiffer>
    <experiments>3</experiments>
</comment>
<comment type="interaction">
    <interactant intactId="EBI-1383528">
        <id>P17252</id>
    </interactant>
    <interactant intactId="EBI-713450">
        <id>Q02363</id>
        <label>ID2</label>
    </interactant>
    <organismsDiffer>false</organismsDiffer>
    <experiments>3</experiments>
</comment>
<comment type="interaction">
    <interactant intactId="EBI-1383528">
        <id>P17252</id>
    </interactant>
    <interactant intactId="EBI-11944538">
        <id>Q96FT9-2</id>
        <label>IFT43</label>
    </interactant>
    <organismsDiffer>false</organismsDiffer>
    <experiments>3</experiments>
</comment>
<comment type="interaction">
    <interactant intactId="EBI-1383528">
        <id>P17252</id>
    </interactant>
    <interactant intactId="EBI-715709">
        <id>P17936</id>
        <label>IGFBP3</label>
    </interactant>
    <organismsDiffer>false</organismsDiffer>
    <experiments>3</experiments>
</comment>
<comment type="interaction">
    <interactant intactId="EBI-1383528">
        <id>P17252</id>
    </interactant>
    <interactant intactId="EBI-1757512">
        <id>P26951</id>
        <label>IL3RA</label>
    </interactant>
    <organismsDiffer>false</organismsDiffer>
    <experiments>3</experiments>
</comment>
<comment type="interaction">
    <interactant intactId="EBI-1383528">
        <id>P17252</id>
    </interactant>
    <interactant intactId="EBI-9996449">
        <id>Q9BYR8</id>
        <label>KRTAP3-1</label>
    </interactant>
    <organismsDiffer>false</organismsDiffer>
    <experiments>3</experiments>
</comment>
<comment type="interaction">
    <interactant intactId="EBI-1383528">
        <id>P17252</id>
    </interactant>
    <interactant intactId="EBI-727376">
        <id>Q9Y234</id>
        <label>LIPT1</label>
    </interactant>
    <organismsDiffer>false</organismsDiffer>
    <experiments>4</experiments>
</comment>
<comment type="interaction">
    <interactant intactId="EBI-1383528">
        <id>P17252</id>
    </interactant>
    <interactant intactId="EBI-725780">
        <id>P51884</id>
        <label>LUM</label>
    </interactant>
    <organismsDiffer>false</organismsDiffer>
    <experiments>3</experiments>
</comment>
<comment type="interaction">
    <interactant intactId="EBI-1383528">
        <id>P17252</id>
    </interactant>
    <interactant intactId="EBI-473834">
        <id>Q9H213</id>
        <label>MAGEH1</label>
    </interactant>
    <organismsDiffer>false</organismsDiffer>
    <experiments>3</experiments>
</comment>
<comment type="interaction">
    <interactant intactId="EBI-1383528">
        <id>P17252</id>
    </interactant>
    <interactant intactId="EBI-3951604">
        <id>P80192</id>
        <label>MAP3K9</label>
    </interactant>
    <organismsDiffer>false</organismsDiffer>
    <experiments>3</experiments>
</comment>
<comment type="interaction">
    <interactant intactId="EBI-1383528">
        <id>P17252</id>
    </interactant>
    <interactant intactId="EBI-298304">
        <id>Q15759</id>
        <label>MAPK11</label>
    </interactant>
    <organismsDiffer>false</organismsDiffer>
    <experiments>3</experiments>
</comment>
<comment type="interaction">
    <interactant intactId="EBI-1383528">
        <id>P17252</id>
    </interactant>
    <interactant intactId="EBI-13288755">
        <id>A0JLT2-2</id>
        <label>MED19</label>
    </interactant>
    <organismsDiffer>false</organismsDiffer>
    <experiments>3</experiments>
</comment>
<comment type="interaction">
    <interactant intactId="EBI-1383528">
        <id>P17252</id>
    </interactant>
    <interactant intactId="EBI-11109389">
        <id>Q8N983-3</id>
        <label>MRPL43</label>
    </interactant>
    <organismsDiffer>false</organismsDiffer>
    <experiments>3</experiments>
</comment>
<comment type="interaction">
    <interactant intactId="EBI-1383528">
        <id>P17252</id>
    </interactant>
    <interactant intactId="EBI-748312">
        <id>P49821</id>
        <label>NDUFV1</label>
    </interactant>
    <organismsDiffer>false</organismsDiffer>
    <experiments>3</experiments>
</comment>
<comment type="interaction">
    <interactant intactId="EBI-1383528">
        <id>P17252</id>
    </interactant>
    <interactant intactId="EBI-9978021">
        <id>Q2M1J6</id>
        <label>OXA1L</label>
    </interactant>
    <organismsDiffer>false</organismsDiffer>
    <experiments>3</experiments>
</comment>
<comment type="interaction">
    <interactant intactId="EBI-1383528">
        <id>P17252</id>
    </interactant>
    <interactant intactId="EBI-1043580">
        <id>Q9BRX2</id>
        <label>PELO</label>
    </interactant>
    <organismsDiffer>false</organismsDiffer>
    <experiments>3</experiments>
</comment>
<comment type="interaction">
    <interactant intactId="EBI-1383528">
        <id>P17252</id>
    </interactant>
    <interactant intactId="EBI-2803703">
        <id>Q9Y6X2</id>
        <label>PIAS3</label>
    </interactant>
    <organismsDiffer>false</organismsDiffer>
    <experiments>3</experiments>
</comment>
<comment type="interaction">
    <interactant intactId="EBI-1383528">
        <id>P17252</id>
    </interactant>
    <interactant intactId="EBI-1018633">
        <id>P11309-2</id>
        <label>PIM1</label>
    </interactant>
    <organismsDiffer>false</organismsDiffer>
    <experiments>2</experiments>
</comment>
<comment type="interaction">
    <interactant intactId="EBI-1383528">
        <id>P17252</id>
    </interactant>
    <interactant intactId="EBI-10694821">
        <id>Q6P1J6-2</id>
        <label>PLB1</label>
    </interactant>
    <organismsDiffer>false</organismsDiffer>
    <experiments>3</experiments>
</comment>
<comment type="interaction">
    <interactant intactId="EBI-1383528">
        <id>P17252</id>
    </interactant>
    <interactant intactId="EBI-741774">
        <id>Q9UNA4</id>
        <label>POLI</label>
    </interactant>
    <organismsDiffer>false</organismsDiffer>
    <experiments>3</experiments>
</comment>
<comment type="interaction">
    <interactant intactId="EBI-1383528">
        <id>P17252</id>
    </interactant>
    <interactant intactId="EBI-706254">
        <id>Q02156</id>
        <label>PRKCE</label>
    </interactant>
    <organismsDiffer>false</organismsDiffer>
    <experiments>2</experiments>
</comment>
<comment type="interaction">
    <interactant intactId="EBI-1383528">
        <id>P17252</id>
    </interactant>
    <interactant intactId="EBI-2803380">
        <id>P07225</id>
        <label>PROS1</label>
    </interactant>
    <organismsDiffer>false</organismsDiffer>
    <experiments>3</experiments>
</comment>
<comment type="interaction">
    <interactant intactId="EBI-1383528">
        <id>P17252</id>
    </interactant>
    <interactant intactId="EBI-25885259">
        <id>Q3YEC7-3</id>
        <label>RABL6</label>
    </interactant>
    <organismsDiffer>false</organismsDiffer>
    <experiments>3</experiments>
</comment>
<comment type="interaction">
    <interactant intactId="EBI-1383528">
        <id>P17252</id>
    </interactant>
    <interactant intactId="EBI-6426999">
        <id>O94844</id>
        <label>RHOBTB1</label>
    </interactant>
    <organismsDiffer>false</organismsDiffer>
    <experiments>3</experiments>
</comment>
<comment type="interaction">
    <interactant intactId="EBI-1383528">
        <id>P17252</id>
    </interactant>
    <interactant intactId="EBI-25884400">
        <id>Q9NWS8-3</id>
        <label>RMND1</label>
    </interactant>
    <organismsDiffer>false</organismsDiffer>
    <experiments>3</experiments>
</comment>
<comment type="interaction">
    <interactant intactId="EBI-1383528">
        <id>P17252</id>
    </interactant>
    <interactant intactId="EBI-36513929">
        <id>Q9ULK6-3</id>
        <label>RNF150</label>
    </interactant>
    <organismsDiffer>false</organismsDiffer>
    <experiments>3</experiments>
</comment>
<comment type="interaction">
    <interactant intactId="EBI-1383528">
        <id>P17252</id>
    </interactant>
    <interactant intactId="EBI-353383">
        <id>P18077</id>
        <label>RPL35A</label>
    </interactant>
    <organismsDiffer>false</organismsDiffer>
    <experiments>3</experiments>
</comment>
<comment type="interaction">
    <interactant intactId="EBI-1383528">
        <id>P17252</id>
    </interactant>
    <interactant intactId="EBI-3913237">
        <id>P31431</id>
        <label>SDC4</label>
    </interactant>
    <organismsDiffer>false</organismsDiffer>
    <experiments>2</experiments>
</comment>
<comment type="interaction">
    <interactant intactId="EBI-1383528">
        <id>P17252</id>
    </interactant>
    <interactant intactId="EBI-1224539">
        <id>Q99643</id>
        <label>SDHC</label>
    </interactant>
    <organismsDiffer>false</organismsDiffer>
    <experiments>3</experiments>
</comment>
<comment type="interaction">
    <interactant intactId="EBI-1383528">
        <id>P17252</id>
    </interactant>
    <interactant intactId="EBI-745901">
        <id>Q14141</id>
        <label>SEPTIN6</label>
    </interactant>
    <organismsDiffer>false</organismsDiffer>
    <experiments>3</experiments>
</comment>
<comment type="interaction">
    <interactant intactId="EBI-1383528">
        <id>P17252</id>
    </interactant>
    <interactant intactId="EBI-7481343">
        <id>Q01105-2</id>
        <label>SET</label>
    </interactant>
    <organismsDiffer>false</organismsDiffer>
    <experiments>3</experiments>
</comment>
<comment type="interaction">
    <interactant intactId="EBI-1383528">
        <id>P17252</id>
    </interactant>
    <interactant intactId="EBI-985879">
        <id>P37840</id>
        <label>SNCA</label>
    </interactant>
    <organismsDiffer>false</organismsDiffer>
    <experiments>3</experiments>
</comment>
<comment type="interaction">
    <interactant intactId="EBI-1383528">
        <id>P17252</id>
    </interactant>
    <interactant intactId="EBI-10329478">
        <id>Q9Y5X0</id>
        <label>SNX10</label>
    </interactant>
    <organismsDiffer>false</organismsDiffer>
    <experiments>3</experiments>
</comment>
<comment type="interaction">
    <interactant intactId="EBI-1383528">
        <id>P17252</id>
    </interactant>
    <interactant intactId="EBI-1167533">
        <id>P56693</id>
        <label>SOX10</label>
    </interactant>
    <organismsDiffer>false</organismsDiffer>
    <experiments>3</experiments>
</comment>
<comment type="interaction">
    <interactant intactId="EBI-1383528">
        <id>P17252</id>
    </interactant>
    <interactant intactId="EBI-25868254">
        <id>Q9BRW5</id>
        <label>SP2</label>
    </interactant>
    <organismsDiffer>false</organismsDiffer>
    <experiments>3</experiments>
</comment>
<comment type="interaction">
    <interactant intactId="EBI-1383528">
        <id>P17252</id>
    </interactant>
    <interactant intactId="EBI-11321949">
        <id>O43761</id>
        <label>SYNGR3</label>
    </interactant>
    <organismsDiffer>false</organismsDiffer>
    <experiments>3</experiments>
</comment>
<comment type="interaction">
    <interactant intactId="EBI-1383528">
        <id>P17252</id>
    </interactant>
    <interactant intactId="EBI-533224">
        <id>P15884</id>
        <label>TCF4</label>
    </interactant>
    <organismsDiffer>false</organismsDiffer>
    <experiments>3</experiments>
</comment>
<comment type="interaction">
    <interactant intactId="EBI-1383528">
        <id>P17252</id>
    </interactant>
    <interactant intactId="EBI-2821479">
        <id>Q3YBM2</id>
        <label>TMEM176B</label>
    </interactant>
    <organismsDiffer>false</organismsDiffer>
    <experiments>3</experiments>
</comment>
<comment type="interaction">
    <interactant intactId="EBI-1383528">
        <id>P17252</id>
    </interactant>
    <interactant intactId="EBI-1390168">
        <id>Q9H8H3</id>
        <label>TMT1A</label>
    </interactant>
    <organismsDiffer>false</organismsDiffer>
    <experiments>3</experiments>
</comment>
<comment type="interaction">
    <interactant intactId="EBI-1383528">
        <id>P17252</id>
    </interactant>
    <interactant intactId="EBI-3390054">
        <id>P0CG48</id>
        <label>UBC</label>
    </interactant>
    <organismsDiffer>false</organismsDiffer>
    <experiments>2</experiments>
</comment>
<comment type="interaction">
    <interactant intactId="EBI-1383528">
        <id>P17252</id>
    </interactant>
    <interactant intactId="EBI-25834258">
        <id>P13051-2</id>
        <label>UNG</label>
    </interactant>
    <organismsDiffer>false</organismsDiffer>
    <experiments>3</experiments>
</comment>
<comment type="interaction">
    <interactant intactId="EBI-1383528">
        <id>P17252</id>
    </interactant>
    <interactant intactId="EBI-2512509">
        <id>Q8NB14</id>
        <label>USP38</label>
    </interactant>
    <organismsDiffer>false</organismsDiffer>
    <experiments>3</experiments>
</comment>
<comment type="interaction">
    <interactant intactId="EBI-1383528">
        <id>P17252</id>
    </interactant>
    <interactant intactId="EBI-21494555">
        <id>O95498</id>
        <label>VNN2</label>
    </interactant>
    <organismsDiffer>false</organismsDiffer>
    <experiments>3</experiments>
</comment>
<comment type="interaction">
    <interactant intactId="EBI-1383528">
        <id>P17252</id>
    </interactant>
    <interactant intactId="EBI-12040603">
        <id>Q9NZC7-5</id>
        <label>WWOX</label>
    </interactant>
    <organismsDiffer>false</organismsDiffer>
    <experiments>3</experiments>
</comment>
<comment type="interaction">
    <interactant intactId="EBI-1383528">
        <id>P17252</id>
    </interactant>
    <interactant intactId="EBI-2849569">
        <id>Q9BQ24</id>
        <label>ZFYVE21</label>
    </interactant>
    <organismsDiffer>false</organismsDiffer>
    <experiments>3</experiments>
</comment>
<comment type="interaction">
    <interactant intactId="EBI-1383528">
        <id>P17252</id>
    </interactant>
    <interactant intactId="EBI-25835471">
        <id>Q05CR2</id>
        <label>ZNF248</label>
    </interactant>
    <organismsDiffer>false</organismsDiffer>
    <experiments>3</experiments>
</comment>
<comment type="interaction">
    <interactant intactId="EBI-1383528">
        <id>P17252</id>
    </interactant>
    <interactant intactId="EBI-12010736">
        <id>Q8N0Y2-2</id>
        <label>ZNF444</label>
    </interactant>
    <organismsDiffer>false</organismsDiffer>
    <experiments>3</experiments>
</comment>
<comment type="interaction">
    <interactant intactId="EBI-1383528">
        <id>P17252</id>
    </interactant>
    <interactant intactId="EBI-751531">
        <id>O15535</id>
        <label>ZSCAN9</label>
    </interactant>
    <organismsDiffer>false</organismsDiffer>
    <experiments>3</experiments>
</comment>
<comment type="interaction">
    <interactant intactId="EBI-1383528">
        <id>P17252</id>
    </interactant>
    <interactant intactId="EBI-195326">
        <id>Q24008</id>
        <label>inaD</label>
    </interactant>
    <organismsDiffer>true</organismsDiffer>
    <experiments>2</experiments>
</comment>
<comment type="subcellular location">
    <subcellularLocation>
        <location evidence="29">Cytoplasm</location>
    </subcellularLocation>
    <subcellularLocation>
        <location evidence="29 33">Cell membrane</location>
        <topology evidence="41 42">Peripheral membrane protein</topology>
    </subcellularLocation>
    <subcellularLocation>
        <location evidence="34">Mitochondrion membrane</location>
        <topology evidence="43">Peripheral membrane protein</topology>
    </subcellularLocation>
    <subcellularLocation>
        <location evidence="4">Nucleus</location>
    </subcellularLocation>
</comment>
<comment type="PTM">
    <text evidence="27">In response to growth factors, phosphorylated at Thr-631 and Ser-657 by the mTORC2 complex, promoting autophosphorylation and activation of PRKCA.</text>
</comment>
<comment type="similarity">
    <text evidence="39">Belongs to the protein kinase superfamily. AGC Ser/Thr protein kinase family. PKC subfamily.</text>
</comment>
<proteinExistence type="evidence at protein level"/>
<gene>
    <name type="primary">PRKCA</name>
    <name type="synonym">PKCA</name>
    <name type="synonym">PRKACA</name>
</gene>
<dbReference type="EC" id="2.7.11.13" evidence="30 33"/>
<dbReference type="EMBL" id="X52479">
    <property type="protein sequence ID" value="CAA36718.1"/>
    <property type="molecule type" value="mRNA"/>
</dbReference>
<dbReference type="EMBL" id="AB451258">
    <property type="protein sequence ID" value="BAG70072.1"/>
    <property type="molecule type" value="mRNA"/>
</dbReference>
<dbReference type="EMBL" id="AB451383">
    <property type="protein sequence ID" value="BAG70197.1"/>
    <property type="molecule type" value="mRNA"/>
</dbReference>
<dbReference type="EMBL" id="AC005918">
    <property type="status" value="NOT_ANNOTATED_CDS"/>
    <property type="molecule type" value="Genomic_DNA"/>
</dbReference>
<dbReference type="EMBL" id="AC005988">
    <property type="status" value="NOT_ANNOTATED_CDS"/>
    <property type="molecule type" value="Genomic_DNA"/>
</dbReference>
<dbReference type="EMBL" id="AC006263">
    <property type="status" value="NOT_ANNOTATED_CDS"/>
    <property type="molecule type" value="Genomic_DNA"/>
</dbReference>
<dbReference type="EMBL" id="AC006947">
    <property type="status" value="NOT_ANNOTATED_CDS"/>
    <property type="molecule type" value="Genomic_DNA"/>
</dbReference>
<dbReference type="EMBL" id="AC009452">
    <property type="status" value="NOT_ANNOTATED_CDS"/>
    <property type="molecule type" value="Genomic_DNA"/>
</dbReference>
<dbReference type="EMBL" id="AC060796">
    <property type="status" value="NOT_ANNOTATED_CDS"/>
    <property type="molecule type" value="Genomic_DNA"/>
</dbReference>
<dbReference type="EMBL" id="CH471099">
    <property type="protein sequence ID" value="EAW89014.1"/>
    <property type="molecule type" value="Genomic_DNA"/>
</dbReference>
<dbReference type="EMBL" id="BC109273">
    <property type="protein sequence ID" value="AAI09274.1"/>
    <property type="molecule type" value="mRNA"/>
</dbReference>
<dbReference type="EMBL" id="BC109274">
    <property type="protein sequence ID" value="AAI09275.1"/>
    <property type="molecule type" value="mRNA"/>
</dbReference>
<dbReference type="EMBL" id="M22199">
    <property type="protein sequence ID" value="AAA60098.1"/>
    <property type="molecule type" value="mRNA"/>
</dbReference>
<dbReference type="EMBL" id="AF395829">
    <property type="protein sequence ID" value="AAK84184.1"/>
    <property type="molecule type" value="Genomic_DNA"/>
</dbReference>
<dbReference type="CCDS" id="CCDS11664.1"/>
<dbReference type="PIR" id="S09496">
    <property type="entry name" value="KIHUCA"/>
</dbReference>
<dbReference type="RefSeq" id="NP_002728.2">
    <property type="nucleotide sequence ID" value="NM_002737.3"/>
</dbReference>
<dbReference type="PDB" id="2ELI">
    <property type="method" value="NMR"/>
    <property type="chains" value="A=93-169"/>
</dbReference>
<dbReference type="PDB" id="3IW4">
    <property type="method" value="X-ray"/>
    <property type="resolution" value="2.80 A"/>
    <property type="chains" value="A/B/C=320-672"/>
</dbReference>
<dbReference type="PDB" id="4DNL">
    <property type="method" value="X-ray"/>
    <property type="resolution" value="1.90 A"/>
    <property type="chains" value="A=155-293"/>
</dbReference>
<dbReference type="PDB" id="4RA4">
    <property type="method" value="X-ray"/>
    <property type="resolution" value="2.63 A"/>
    <property type="chains" value="A=318-672"/>
</dbReference>
<dbReference type="PDB" id="8U37">
    <property type="method" value="X-ray"/>
    <property type="resolution" value="2.48 A"/>
    <property type="chains" value="A=320-672"/>
</dbReference>
<dbReference type="PDB" id="8UAK">
    <property type="method" value="X-ray"/>
    <property type="resolution" value="2.82 A"/>
    <property type="chains" value="A=320-672"/>
</dbReference>
<dbReference type="PDBsum" id="2ELI"/>
<dbReference type="PDBsum" id="3IW4"/>
<dbReference type="PDBsum" id="4DNL"/>
<dbReference type="PDBsum" id="4RA4"/>
<dbReference type="PDBsum" id="8U37"/>
<dbReference type="PDBsum" id="8UAK"/>
<dbReference type="BMRB" id="P17252"/>
<dbReference type="SMR" id="P17252"/>
<dbReference type="BioGRID" id="111564">
    <property type="interactions" value="339"/>
</dbReference>
<dbReference type="CORUM" id="P17252"/>
<dbReference type="DIP" id="DIP-531N"/>
<dbReference type="FunCoup" id="P17252">
    <property type="interactions" value="2547"/>
</dbReference>
<dbReference type="IntAct" id="P17252">
    <property type="interactions" value="173"/>
</dbReference>
<dbReference type="MINT" id="P17252"/>
<dbReference type="STRING" id="9606.ENSP00000408695"/>
<dbReference type="BindingDB" id="P17252"/>
<dbReference type="ChEMBL" id="CHEMBL299"/>
<dbReference type="DrugBank" id="DB12996">
    <property type="generic name" value="Acteoside"/>
</dbReference>
<dbReference type="DrugBank" id="DB14001">
    <property type="generic name" value="alpha-Tocopherol succinate"/>
</dbReference>
<dbReference type="DrugBank" id="DB06451">
    <property type="generic name" value="Aprinocarsen"/>
</dbReference>
<dbReference type="DrugBank" id="DB09096">
    <property type="generic name" value="Benzoyl peroxide"/>
</dbReference>
<dbReference type="DrugBank" id="DB11752">
    <property type="generic name" value="Bryostatin 1"/>
</dbReference>
<dbReference type="DrugBank" id="DB12429">
    <property type="generic name" value="CI-1040"/>
</dbReference>
<dbReference type="DrugBank" id="DB14002">
    <property type="generic name" value="D-alpha-Tocopherol acetate"/>
</dbReference>
<dbReference type="DrugBank" id="DB04209">
    <property type="generic name" value="Dequalinium"/>
</dbReference>
<dbReference type="DrugBank" id="DB08846">
    <property type="generic name" value="Ellagic acid"/>
</dbReference>
<dbReference type="DrugBank" id="DB05013">
    <property type="generic name" value="Ingenol mebutate"/>
</dbReference>
<dbReference type="DrugBank" id="DB06595">
    <property type="generic name" value="Midostaurin"/>
</dbReference>
<dbReference type="DrugBank" id="DB06641">
    <property type="generic name" value="Perifosine"/>
</dbReference>
<dbReference type="DrugBank" id="DB06819">
    <property type="generic name" value="Phenylbutyric acid"/>
</dbReference>
<dbReference type="DrugBank" id="DB00144">
    <property type="generic name" value="Phosphatidyl serine"/>
</dbReference>
<dbReference type="DrugBank" id="DB12369">
    <property type="generic name" value="Sotrastaurin"/>
</dbReference>
<dbReference type="DrugBank" id="DB02010">
    <property type="generic name" value="Staurosporine"/>
</dbReference>
<dbReference type="DrugBank" id="DB00675">
    <property type="generic name" value="Tamoxifen"/>
</dbReference>
<dbReference type="DrugBank" id="DB04462">
    <property type="generic name" value="Tetrabromo-2-Benzotriazole"/>
</dbReference>
<dbReference type="DrugBank" id="DB00163">
    <property type="generic name" value="Vitamin E"/>
</dbReference>
<dbReference type="DrugCentral" id="P17252"/>
<dbReference type="GuidetoPHARMACOLOGY" id="1482"/>
<dbReference type="GlyGen" id="P17252">
    <property type="glycosylation" value="1 site, 1 O-linked glycan (1 site)"/>
</dbReference>
<dbReference type="iPTMnet" id="P17252"/>
<dbReference type="MetOSite" id="P17252"/>
<dbReference type="PhosphoSitePlus" id="P17252"/>
<dbReference type="SwissPalm" id="P17252"/>
<dbReference type="BioMuta" id="PRKCA"/>
<dbReference type="DMDM" id="317373571"/>
<dbReference type="CPTAC" id="CPTAC-1615"/>
<dbReference type="CPTAC" id="CPTAC-3172"/>
<dbReference type="CPTAC" id="CPTAC-3173"/>
<dbReference type="jPOST" id="P17252"/>
<dbReference type="MassIVE" id="P17252"/>
<dbReference type="PaxDb" id="9606-ENSP00000408695"/>
<dbReference type="PeptideAtlas" id="P17252"/>
<dbReference type="ProteomicsDB" id="53464"/>
<dbReference type="Pumba" id="P17252"/>
<dbReference type="Antibodypedia" id="1464">
    <property type="antibodies" value="1246 antibodies from 48 providers"/>
</dbReference>
<dbReference type="DNASU" id="5578"/>
<dbReference type="Ensembl" id="ENST00000413366.8">
    <property type="protein sequence ID" value="ENSP00000408695.3"/>
    <property type="gene ID" value="ENSG00000154229.12"/>
</dbReference>
<dbReference type="GeneID" id="5578"/>
<dbReference type="KEGG" id="hsa:5578"/>
<dbReference type="MANE-Select" id="ENST00000413366.8">
    <property type="protein sequence ID" value="ENSP00000408695.3"/>
    <property type="RefSeq nucleotide sequence ID" value="NM_002737.3"/>
    <property type="RefSeq protein sequence ID" value="NP_002728.2"/>
</dbReference>
<dbReference type="UCSC" id="uc002jfp.2">
    <property type="organism name" value="human"/>
</dbReference>
<dbReference type="AGR" id="HGNC:9393"/>
<dbReference type="CTD" id="5578"/>
<dbReference type="DisGeNET" id="5578"/>
<dbReference type="GeneCards" id="PRKCA"/>
<dbReference type="HGNC" id="HGNC:9393">
    <property type="gene designation" value="PRKCA"/>
</dbReference>
<dbReference type="HPA" id="ENSG00000154229">
    <property type="expression patterns" value="Tissue enhanced (brain)"/>
</dbReference>
<dbReference type="MalaCards" id="PRKCA"/>
<dbReference type="MIM" id="176960">
    <property type="type" value="gene"/>
</dbReference>
<dbReference type="neXtProt" id="NX_P17252"/>
<dbReference type="OpenTargets" id="ENSG00000154229"/>
<dbReference type="PharmGKB" id="PA33759"/>
<dbReference type="VEuPathDB" id="HostDB:ENSG00000154229"/>
<dbReference type="eggNOG" id="KOG0696">
    <property type="taxonomic scope" value="Eukaryota"/>
</dbReference>
<dbReference type="GeneTree" id="ENSGT00940000156104"/>
<dbReference type="HOGENOM" id="CLU_000288_54_2_1"/>
<dbReference type="InParanoid" id="P17252"/>
<dbReference type="OMA" id="VHEIKSH"/>
<dbReference type="OrthoDB" id="63267at2759"/>
<dbReference type="PAN-GO" id="P17252">
    <property type="GO annotations" value="3 GO annotations based on evolutionary models"/>
</dbReference>
<dbReference type="PhylomeDB" id="P17252"/>
<dbReference type="TreeFam" id="TF351133"/>
<dbReference type="BRENDA" id="2.7.11.13">
    <property type="organism ID" value="2681"/>
</dbReference>
<dbReference type="PathwayCommons" id="P17252"/>
<dbReference type="Reactome" id="R-HSA-111933">
    <property type="pathway name" value="Calmodulin induced events"/>
</dbReference>
<dbReference type="Reactome" id="R-HSA-114516">
    <property type="pathway name" value="Disinhibition of SNARE formation"/>
</dbReference>
<dbReference type="Reactome" id="R-HSA-1250196">
    <property type="pathway name" value="SHC1 events in ERBB2 signaling"/>
</dbReference>
<dbReference type="Reactome" id="R-HSA-1433557">
    <property type="pathway name" value="Signaling by SCF-KIT"/>
</dbReference>
<dbReference type="Reactome" id="R-HSA-1433559">
    <property type="pathway name" value="Regulation of KIT signaling"/>
</dbReference>
<dbReference type="Reactome" id="R-HSA-2179392">
    <property type="pathway name" value="EGFR Transactivation by Gastrin"/>
</dbReference>
<dbReference type="Reactome" id="R-HSA-2514859">
    <property type="pathway name" value="Inactivation, recovery and regulation of the phototransduction cascade"/>
</dbReference>
<dbReference type="Reactome" id="R-HSA-3000170">
    <property type="pathway name" value="Syndecan interactions"/>
</dbReference>
<dbReference type="Reactome" id="R-HSA-399997">
    <property type="pathway name" value="Acetylcholine regulates insulin secretion"/>
</dbReference>
<dbReference type="Reactome" id="R-HSA-4086398">
    <property type="pathway name" value="Ca2+ pathway"/>
</dbReference>
<dbReference type="Reactome" id="R-HSA-416993">
    <property type="pathway name" value="Trafficking of GluR2-containing AMPA receptors"/>
</dbReference>
<dbReference type="Reactome" id="R-HSA-418597">
    <property type="pathway name" value="G alpha (z) signalling events"/>
</dbReference>
<dbReference type="Reactome" id="R-HSA-4419969">
    <property type="pathway name" value="Depolymerization of the Nuclear Lamina"/>
</dbReference>
<dbReference type="Reactome" id="R-HSA-450520">
    <property type="pathway name" value="HuR (ELAVL1) binds and stabilizes mRNA"/>
</dbReference>
<dbReference type="Reactome" id="R-HSA-5099900">
    <property type="pathway name" value="WNT5A-dependent internalization of FZD4"/>
</dbReference>
<dbReference type="Reactome" id="R-HSA-5218921">
    <property type="pathway name" value="VEGFR2 mediated cell proliferation"/>
</dbReference>
<dbReference type="Reactome" id="R-HSA-5668599">
    <property type="pathway name" value="RHO GTPases Activate NADPH Oxidases"/>
</dbReference>
<dbReference type="Reactome" id="R-HSA-76005">
    <property type="pathway name" value="Response to elevated platelet cytosolic Ca2+"/>
</dbReference>
<dbReference type="Reactome" id="R-HSA-8853659">
    <property type="pathway name" value="RET signaling"/>
</dbReference>
<dbReference type="Reactome" id="R-HSA-9010642">
    <property type="pathway name" value="ROBO receptors bind AKAP5"/>
</dbReference>
<dbReference type="SABIO-RK" id="P17252"/>
<dbReference type="SignaLink" id="P17252"/>
<dbReference type="SIGNOR" id="P17252"/>
<dbReference type="BioGRID-ORCS" id="5578">
    <property type="hits" value="13 hits in 1191 CRISPR screens"/>
</dbReference>
<dbReference type="CD-CODE" id="DEE660B4">
    <property type="entry name" value="Stress granule"/>
</dbReference>
<dbReference type="CD-CODE" id="FB4E32DD">
    <property type="entry name" value="Presynaptic clusters and postsynaptic densities"/>
</dbReference>
<dbReference type="ChiTaRS" id="PRKCA">
    <property type="organism name" value="human"/>
</dbReference>
<dbReference type="EvolutionaryTrace" id="P17252"/>
<dbReference type="GeneWiki" id="PKC_alpha"/>
<dbReference type="GenomeRNAi" id="5578"/>
<dbReference type="Pharos" id="P17252">
    <property type="development level" value="Tchem"/>
</dbReference>
<dbReference type="PRO" id="PR:P17252"/>
<dbReference type="Proteomes" id="UP000005640">
    <property type="component" value="Chromosome 17"/>
</dbReference>
<dbReference type="RNAct" id="P17252">
    <property type="molecule type" value="protein"/>
</dbReference>
<dbReference type="Bgee" id="ENSG00000154229">
    <property type="expression patterns" value="Expressed in CA1 field of hippocampus and 192 other cell types or tissues"/>
</dbReference>
<dbReference type="ExpressionAtlas" id="P17252">
    <property type="expression patterns" value="baseline and differential"/>
</dbReference>
<dbReference type="GO" id="GO:0035866">
    <property type="term" value="C:alphav-beta3 integrin-PKCalpha complex"/>
    <property type="evidence" value="ECO:0000250"/>
    <property type="project" value="BHF-UCL"/>
</dbReference>
<dbReference type="GO" id="GO:0036064">
    <property type="term" value="C:ciliary basal body"/>
    <property type="evidence" value="ECO:0000314"/>
    <property type="project" value="UniProt"/>
</dbReference>
<dbReference type="GO" id="GO:0005737">
    <property type="term" value="C:cytoplasm"/>
    <property type="evidence" value="ECO:0000314"/>
    <property type="project" value="UniProtKB"/>
</dbReference>
<dbReference type="GO" id="GO:0005829">
    <property type="term" value="C:cytosol"/>
    <property type="evidence" value="ECO:0000314"/>
    <property type="project" value="UniProtKB"/>
</dbReference>
<dbReference type="GO" id="GO:0005783">
    <property type="term" value="C:endoplasmic reticulum"/>
    <property type="evidence" value="ECO:0000314"/>
    <property type="project" value="BHF-UCL"/>
</dbReference>
<dbReference type="GO" id="GO:0070062">
    <property type="term" value="C:extracellular exosome"/>
    <property type="evidence" value="ECO:0007005"/>
    <property type="project" value="UniProtKB"/>
</dbReference>
<dbReference type="GO" id="GO:0031966">
    <property type="term" value="C:mitochondrial membrane"/>
    <property type="evidence" value="ECO:0007669"/>
    <property type="project" value="UniProtKB-SubCell"/>
</dbReference>
<dbReference type="GO" id="GO:0005739">
    <property type="term" value="C:mitochondrion"/>
    <property type="evidence" value="ECO:0007005"/>
    <property type="project" value="UniProtKB"/>
</dbReference>
<dbReference type="GO" id="GO:0005654">
    <property type="term" value="C:nucleoplasm"/>
    <property type="evidence" value="ECO:0000304"/>
    <property type="project" value="Reactome"/>
</dbReference>
<dbReference type="GO" id="GO:0048471">
    <property type="term" value="C:perinuclear region of cytoplasm"/>
    <property type="evidence" value="ECO:0000250"/>
    <property type="project" value="UniProtKB"/>
</dbReference>
<dbReference type="GO" id="GO:0005886">
    <property type="term" value="C:plasma membrane"/>
    <property type="evidence" value="ECO:0000314"/>
    <property type="project" value="UniProtKB"/>
</dbReference>
<dbReference type="GO" id="GO:0005524">
    <property type="term" value="F:ATP binding"/>
    <property type="evidence" value="ECO:0007669"/>
    <property type="project" value="UniProtKB-KW"/>
</dbReference>
<dbReference type="GO" id="GO:0004698">
    <property type="term" value="F:calcium,diacylglycerol-dependent serine/threonine kinase activity"/>
    <property type="evidence" value="ECO:0000314"/>
    <property type="project" value="UniProtKB"/>
</dbReference>
<dbReference type="GO" id="GO:0019992">
    <property type="term" value="F:diacylglycerol binding"/>
    <property type="evidence" value="ECO:0000304"/>
    <property type="project" value="Reactome"/>
</dbReference>
<dbReference type="GO" id="GO:0004697">
    <property type="term" value="F:diacylglycerol-dependent serine/threonine kinase activity"/>
    <property type="evidence" value="ECO:0000269"/>
    <property type="project" value="Reactome"/>
</dbReference>
<dbReference type="GO" id="GO:0019899">
    <property type="term" value="F:enzyme binding"/>
    <property type="evidence" value="ECO:0000353"/>
    <property type="project" value="BHF-UCL"/>
</dbReference>
<dbReference type="GO" id="GO:0035403">
    <property type="term" value="F:histone H3T6 kinase activity"/>
    <property type="evidence" value="ECO:0000314"/>
    <property type="project" value="UniProtKB"/>
</dbReference>
<dbReference type="GO" id="GO:0005178">
    <property type="term" value="F:integrin binding"/>
    <property type="evidence" value="ECO:0000250"/>
    <property type="project" value="BHF-UCL"/>
</dbReference>
<dbReference type="GO" id="GO:0004672">
    <property type="term" value="F:protein kinase activity"/>
    <property type="evidence" value="ECO:0000314"/>
    <property type="project" value="UniProtKB"/>
</dbReference>
<dbReference type="GO" id="GO:0106310">
    <property type="term" value="F:protein serine kinase activity"/>
    <property type="evidence" value="ECO:0007669"/>
    <property type="project" value="RHEA"/>
</dbReference>
<dbReference type="GO" id="GO:0004674">
    <property type="term" value="F:protein serine/threonine kinase activity"/>
    <property type="evidence" value="ECO:0000318"/>
    <property type="project" value="GO_Central"/>
</dbReference>
<dbReference type="GO" id="GO:0008270">
    <property type="term" value="F:zinc ion binding"/>
    <property type="evidence" value="ECO:0007669"/>
    <property type="project" value="UniProtKB-KW"/>
</dbReference>
<dbReference type="GO" id="GO:0001525">
    <property type="term" value="P:angiogenesis"/>
    <property type="evidence" value="ECO:0007669"/>
    <property type="project" value="UniProtKB-KW"/>
</dbReference>
<dbReference type="GO" id="GO:0097190">
    <property type="term" value="P:apoptotic signaling pathway"/>
    <property type="evidence" value="ECO:0000304"/>
    <property type="project" value="ProtInc"/>
</dbReference>
<dbReference type="GO" id="GO:0007155">
    <property type="term" value="P:cell adhesion"/>
    <property type="evidence" value="ECO:0007669"/>
    <property type="project" value="UniProtKB-KW"/>
</dbReference>
<dbReference type="GO" id="GO:0021955">
    <property type="term" value="P:central nervous system neuron axonogenesis"/>
    <property type="evidence" value="ECO:0007669"/>
    <property type="project" value="Ensembl"/>
</dbReference>
<dbReference type="GO" id="GO:0002159">
    <property type="term" value="P:desmosome assembly"/>
    <property type="evidence" value="ECO:0000315"/>
    <property type="project" value="BHF-UCL"/>
</dbReference>
<dbReference type="GO" id="GO:0035556">
    <property type="term" value="P:intracellular signal transduction"/>
    <property type="evidence" value="ECO:0000318"/>
    <property type="project" value="GO_Central"/>
</dbReference>
<dbReference type="GO" id="GO:0007611">
    <property type="term" value="P:learning or memory"/>
    <property type="evidence" value="ECO:0007669"/>
    <property type="project" value="Ensembl"/>
</dbReference>
<dbReference type="GO" id="GO:0007077">
    <property type="term" value="P:mitotic nuclear membrane disassembly"/>
    <property type="evidence" value="ECO:0000304"/>
    <property type="project" value="Reactome"/>
</dbReference>
<dbReference type="GO" id="GO:1900016">
    <property type="term" value="P:negative regulation of cytokine production involved in inflammatory response"/>
    <property type="evidence" value="ECO:0000250"/>
    <property type="project" value="UniProt"/>
</dbReference>
<dbReference type="GO" id="GO:0034351">
    <property type="term" value="P:negative regulation of glial cell apoptotic process"/>
    <property type="evidence" value="ECO:0000315"/>
    <property type="project" value="UniProtKB"/>
</dbReference>
<dbReference type="GO" id="GO:0017148">
    <property type="term" value="P:negative regulation of translation"/>
    <property type="evidence" value="ECO:0007669"/>
    <property type="project" value="Ensembl"/>
</dbReference>
<dbReference type="GO" id="GO:0018107">
    <property type="term" value="P:peptidyl-threonine phosphorylation"/>
    <property type="evidence" value="ECO:0000250"/>
    <property type="project" value="ARUK-UCL"/>
</dbReference>
<dbReference type="GO" id="GO:0106071">
    <property type="term" value="P:positive regulation of adenylate cyclase-activating G protein-coupled receptor signaling pathway"/>
    <property type="evidence" value="ECO:0000250"/>
    <property type="project" value="BHF-UCL"/>
</dbReference>
<dbReference type="GO" id="GO:0045766">
    <property type="term" value="P:positive regulation of angiogenesis"/>
    <property type="evidence" value="ECO:0000315"/>
    <property type="project" value="UniProtKB"/>
</dbReference>
<dbReference type="GO" id="GO:0110063">
    <property type="term" value="P:positive regulation of angiotensin-activated signaling pathway"/>
    <property type="evidence" value="ECO:0000314"/>
    <property type="project" value="UniProt"/>
</dbReference>
<dbReference type="GO" id="GO:0043536">
    <property type="term" value="P:positive regulation of blood vessel endothelial cell migration"/>
    <property type="evidence" value="ECO:0000314"/>
    <property type="project" value="DFLAT"/>
</dbReference>
<dbReference type="GO" id="GO:0045780">
    <property type="term" value="P:positive regulation of bone resorption"/>
    <property type="evidence" value="ECO:0000250"/>
    <property type="project" value="BHF-UCL"/>
</dbReference>
<dbReference type="GO" id="GO:0010613">
    <property type="term" value="P:positive regulation of cardiac muscle hypertrophy"/>
    <property type="evidence" value="ECO:0000250"/>
    <property type="project" value="UniProtKB"/>
</dbReference>
<dbReference type="GO" id="GO:0045785">
    <property type="term" value="P:positive regulation of cell adhesion"/>
    <property type="evidence" value="ECO:0000315"/>
    <property type="project" value="UniProtKB"/>
</dbReference>
<dbReference type="GO" id="GO:0030335">
    <property type="term" value="P:positive regulation of cell migration"/>
    <property type="evidence" value="ECO:0000315"/>
    <property type="project" value="UniProtKB"/>
</dbReference>
<dbReference type="GO" id="GO:2000707">
    <property type="term" value="P:positive regulation of dense core granule biogenesis"/>
    <property type="evidence" value="ECO:0000250"/>
    <property type="project" value="UniProtKB"/>
</dbReference>
<dbReference type="GO" id="GO:0010595">
    <property type="term" value="P:positive regulation of endothelial cell migration"/>
    <property type="evidence" value="ECO:0000315"/>
    <property type="project" value="UniProtKB"/>
</dbReference>
<dbReference type="GO" id="GO:0001938">
    <property type="term" value="P:positive regulation of endothelial cell proliferation"/>
    <property type="evidence" value="ECO:0000315"/>
    <property type="project" value="UniProtKB"/>
</dbReference>
<dbReference type="GO" id="GO:0070374">
    <property type="term" value="P:positive regulation of ERK1 and ERK2 cascade"/>
    <property type="evidence" value="ECO:0000250"/>
    <property type="project" value="UniProtKB"/>
</dbReference>
<dbReference type="GO" id="GO:0045921">
    <property type="term" value="P:positive regulation of exocytosis"/>
    <property type="evidence" value="ECO:0007669"/>
    <property type="project" value="Ensembl"/>
</dbReference>
<dbReference type="GO" id="GO:0032024">
    <property type="term" value="P:positive regulation of insulin secretion"/>
    <property type="evidence" value="ECO:0000304"/>
    <property type="project" value="Reactome"/>
</dbReference>
<dbReference type="GO" id="GO:0031666">
    <property type="term" value="P:positive regulation of lipopolysaccharide-mediated signaling pathway"/>
    <property type="evidence" value="ECO:0000315"/>
    <property type="project" value="UniProtKB"/>
</dbReference>
<dbReference type="GO" id="GO:0045651">
    <property type="term" value="P:positive regulation of macrophage differentiation"/>
    <property type="evidence" value="ECO:0000250"/>
    <property type="project" value="UniProtKB"/>
</dbReference>
<dbReference type="GO" id="GO:0045931">
    <property type="term" value="P:positive regulation of mitotic cell cycle"/>
    <property type="evidence" value="ECO:0000315"/>
    <property type="project" value="UniProtKB"/>
</dbReference>
<dbReference type="GO" id="GO:0051897">
    <property type="term" value="P:positive regulation of phosphatidylinositol 3-kinase/protein kinase B signal transduction"/>
    <property type="evidence" value="ECO:0000250"/>
    <property type="project" value="UniProt"/>
</dbReference>
<dbReference type="GO" id="GO:0048661">
    <property type="term" value="P:positive regulation of smooth muscle cell proliferation"/>
    <property type="evidence" value="ECO:0007669"/>
    <property type="project" value="Ensembl"/>
</dbReference>
<dbReference type="GO" id="GO:0051965">
    <property type="term" value="P:positive regulation of synapse assembly"/>
    <property type="evidence" value="ECO:0007669"/>
    <property type="project" value="Ensembl"/>
</dbReference>
<dbReference type="GO" id="GO:0070528">
    <property type="term" value="P:protein kinase C signaling"/>
    <property type="evidence" value="ECO:0000314"/>
    <property type="project" value="UniProtKB"/>
</dbReference>
<dbReference type="GO" id="GO:0006468">
    <property type="term" value="P:protein phosphorylation"/>
    <property type="evidence" value="ECO:0000314"/>
    <property type="project" value="UniProtKB"/>
</dbReference>
<dbReference type="GO" id="GO:0043488">
    <property type="term" value="P:regulation of mRNA stability"/>
    <property type="evidence" value="ECO:0000304"/>
    <property type="project" value="Reactome"/>
</dbReference>
<dbReference type="GO" id="GO:0090330">
    <property type="term" value="P:regulation of platelet aggregation"/>
    <property type="evidence" value="ECO:0000314"/>
    <property type="project" value="UniProtKB"/>
</dbReference>
<dbReference type="GO" id="GO:0051412">
    <property type="term" value="P:response to corticosterone"/>
    <property type="evidence" value="ECO:0007669"/>
    <property type="project" value="Ensembl"/>
</dbReference>
<dbReference type="GO" id="GO:0032355">
    <property type="term" value="P:response to estradiol"/>
    <property type="evidence" value="ECO:0007669"/>
    <property type="project" value="Ensembl"/>
</dbReference>
<dbReference type="GO" id="GO:0045471">
    <property type="term" value="P:response to ethanol"/>
    <property type="evidence" value="ECO:0007669"/>
    <property type="project" value="Ensembl"/>
</dbReference>
<dbReference type="GO" id="GO:0070555">
    <property type="term" value="P:response to interleukin-1"/>
    <property type="evidence" value="ECO:0000315"/>
    <property type="project" value="BHF-UCL"/>
</dbReference>
<dbReference type="GO" id="GO:0009612">
    <property type="term" value="P:response to mechanical stimulus"/>
    <property type="evidence" value="ECO:0007669"/>
    <property type="project" value="Ensembl"/>
</dbReference>
<dbReference type="GO" id="GO:0043434">
    <property type="term" value="P:response to peptide hormone"/>
    <property type="evidence" value="ECO:0007669"/>
    <property type="project" value="Ensembl"/>
</dbReference>
<dbReference type="GO" id="GO:1904627">
    <property type="term" value="P:response to phorbol 13-acetate 12-myristate"/>
    <property type="evidence" value="ECO:0007669"/>
    <property type="project" value="Ensembl"/>
</dbReference>
<dbReference type="GO" id="GO:0000302">
    <property type="term" value="P:response to reactive oxygen species"/>
    <property type="evidence" value="ECO:0007669"/>
    <property type="project" value="Ensembl"/>
</dbReference>
<dbReference type="GO" id="GO:0009636">
    <property type="term" value="P:response to toxic substance"/>
    <property type="evidence" value="ECO:0007669"/>
    <property type="project" value="Ensembl"/>
</dbReference>
<dbReference type="CDD" id="cd20833">
    <property type="entry name" value="C1_cPKC_rpt1"/>
    <property type="match status" value="1"/>
</dbReference>
<dbReference type="CDD" id="cd20836">
    <property type="entry name" value="C1_cPKC_rpt2"/>
    <property type="match status" value="1"/>
</dbReference>
<dbReference type="CDD" id="cd04026">
    <property type="entry name" value="C2_PKC_alpha_gamma"/>
    <property type="match status" value="1"/>
</dbReference>
<dbReference type="CDD" id="cd05615">
    <property type="entry name" value="STKc_cPKC_alpha"/>
    <property type="match status" value="1"/>
</dbReference>
<dbReference type="FunFam" id="2.60.40.150:FF:000012">
    <property type="entry name" value="Kinase C alpha type"/>
    <property type="match status" value="1"/>
</dbReference>
<dbReference type="FunFam" id="1.10.510.10:FF:000023">
    <property type="entry name" value="Protein kinase C"/>
    <property type="match status" value="1"/>
</dbReference>
<dbReference type="FunFam" id="3.30.200.20:FF:000080">
    <property type="entry name" value="Protein kinase C"/>
    <property type="match status" value="1"/>
</dbReference>
<dbReference type="FunFam" id="3.30.200.20:FF:000103">
    <property type="entry name" value="Protein kinase C"/>
    <property type="match status" value="1"/>
</dbReference>
<dbReference type="FunFam" id="3.30.60.20:FF:000006">
    <property type="entry name" value="Protein kinase C"/>
    <property type="match status" value="1"/>
</dbReference>
<dbReference type="FunFam" id="3.30.60.20:FF:000031">
    <property type="entry name" value="Protein kinase C alpha"/>
    <property type="match status" value="1"/>
</dbReference>
<dbReference type="Gene3D" id="3.30.60.20">
    <property type="match status" value="2"/>
</dbReference>
<dbReference type="Gene3D" id="2.60.40.150">
    <property type="entry name" value="C2 domain"/>
    <property type="match status" value="1"/>
</dbReference>
<dbReference type="Gene3D" id="3.30.200.20">
    <property type="entry name" value="Phosphorylase Kinase, domain 1"/>
    <property type="match status" value="2"/>
</dbReference>
<dbReference type="Gene3D" id="1.10.510.10">
    <property type="entry name" value="Transferase(Phosphotransferase) domain 1"/>
    <property type="match status" value="1"/>
</dbReference>
<dbReference type="InterPro" id="IPR000961">
    <property type="entry name" value="AGC-kinase_C"/>
</dbReference>
<dbReference type="InterPro" id="IPR046349">
    <property type="entry name" value="C1-like_sf"/>
</dbReference>
<dbReference type="InterPro" id="IPR000008">
    <property type="entry name" value="C2_dom"/>
</dbReference>
<dbReference type="InterPro" id="IPR035892">
    <property type="entry name" value="C2_domain_sf"/>
</dbReference>
<dbReference type="InterPro" id="IPR034663">
    <property type="entry name" value="cPKC_alpha"/>
</dbReference>
<dbReference type="InterPro" id="IPR020454">
    <property type="entry name" value="DAG/PE-bd"/>
</dbReference>
<dbReference type="InterPro" id="IPR011009">
    <property type="entry name" value="Kinase-like_dom_sf"/>
</dbReference>
<dbReference type="InterPro" id="IPR002219">
    <property type="entry name" value="PE/DAG-bd"/>
</dbReference>
<dbReference type="InterPro" id="IPR017892">
    <property type="entry name" value="Pkinase_C"/>
</dbReference>
<dbReference type="InterPro" id="IPR000719">
    <property type="entry name" value="Prot_kinase_dom"/>
</dbReference>
<dbReference type="InterPro" id="IPR017441">
    <property type="entry name" value="Protein_kinase_ATP_BS"/>
</dbReference>
<dbReference type="InterPro" id="IPR014375">
    <property type="entry name" value="Protein_kinase_C_a/b/g"/>
</dbReference>
<dbReference type="InterPro" id="IPR008271">
    <property type="entry name" value="Ser/Thr_kinase_AS"/>
</dbReference>
<dbReference type="PANTHER" id="PTHR24351">
    <property type="entry name" value="RIBOSOMAL PROTEIN S6 KINASE"/>
    <property type="match status" value="1"/>
</dbReference>
<dbReference type="Pfam" id="PF00130">
    <property type="entry name" value="C1_1"/>
    <property type="match status" value="2"/>
</dbReference>
<dbReference type="Pfam" id="PF00168">
    <property type="entry name" value="C2"/>
    <property type="match status" value="1"/>
</dbReference>
<dbReference type="Pfam" id="PF00069">
    <property type="entry name" value="Pkinase"/>
    <property type="match status" value="1"/>
</dbReference>
<dbReference type="Pfam" id="PF00433">
    <property type="entry name" value="Pkinase_C"/>
    <property type="match status" value="1"/>
</dbReference>
<dbReference type="PIRSF" id="PIRSF000550">
    <property type="entry name" value="PKC_alpha"/>
    <property type="match status" value="1"/>
</dbReference>
<dbReference type="PRINTS" id="PR00360">
    <property type="entry name" value="C2DOMAIN"/>
</dbReference>
<dbReference type="PRINTS" id="PR00008">
    <property type="entry name" value="DAGPEDOMAIN"/>
</dbReference>
<dbReference type="SMART" id="SM00109">
    <property type="entry name" value="C1"/>
    <property type="match status" value="2"/>
</dbReference>
<dbReference type="SMART" id="SM00239">
    <property type="entry name" value="C2"/>
    <property type="match status" value="1"/>
</dbReference>
<dbReference type="SMART" id="SM00133">
    <property type="entry name" value="S_TK_X"/>
    <property type="match status" value="1"/>
</dbReference>
<dbReference type="SMART" id="SM00220">
    <property type="entry name" value="S_TKc"/>
    <property type="match status" value="1"/>
</dbReference>
<dbReference type="SUPFAM" id="SSF49562">
    <property type="entry name" value="C2 domain (Calcium/lipid-binding domain, CaLB)"/>
    <property type="match status" value="1"/>
</dbReference>
<dbReference type="SUPFAM" id="SSF57889">
    <property type="entry name" value="Cysteine-rich domain"/>
    <property type="match status" value="2"/>
</dbReference>
<dbReference type="SUPFAM" id="SSF56112">
    <property type="entry name" value="Protein kinase-like (PK-like)"/>
    <property type="match status" value="1"/>
</dbReference>
<dbReference type="PROSITE" id="PS51285">
    <property type="entry name" value="AGC_KINASE_CTER"/>
    <property type="match status" value="1"/>
</dbReference>
<dbReference type="PROSITE" id="PS50004">
    <property type="entry name" value="C2"/>
    <property type="match status" value="1"/>
</dbReference>
<dbReference type="PROSITE" id="PS00107">
    <property type="entry name" value="PROTEIN_KINASE_ATP"/>
    <property type="match status" value="1"/>
</dbReference>
<dbReference type="PROSITE" id="PS50011">
    <property type="entry name" value="PROTEIN_KINASE_DOM"/>
    <property type="match status" value="1"/>
</dbReference>
<dbReference type="PROSITE" id="PS00108">
    <property type="entry name" value="PROTEIN_KINASE_ST"/>
    <property type="match status" value="1"/>
</dbReference>
<dbReference type="PROSITE" id="PS00479">
    <property type="entry name" value="ZF_DAG_PE_1"/>
    <property type="match status" value="2"/>
</dbReference>
<dbReference type="PROSITE" id="PS50081">
    <property type="entry name" value="ZF_DAG_PE_2"/>
    <property type="match status" value="2"/>
</dbReference>
<sequence length="672" mass="76750">MADVFPGNDSTASQDVANRFARKGALRQKNVHEVKDHKFIARFFKQPTFCSHCTDFIWGFGKQGFQCQVCCFVVHKRCHEFVTFSCPGADKGPDTDDPRSKHKFKIHTYGSPTFCDHCGSLLYGLIHQGMKCDTCDMNVHKQCVINVPSLCGMDHTEKRGRIYLKAEVADEKLHVTVRDAKNLIPMDPNGLSDPYVKLKLIPDPKNESKQKTKTIRSTLNPQWNESFTFKLKPSDKDRRLSVEIWDWDRTTRNDFMGSLSFGVSELMKMPASGWYKLLNQEEGEYYNVPIPEGDEEGNMELRQKFEKAKLGPAGNKVISPSEDRKQPSNNLDRVKLTDFNFLMVLGKGSFGKVMLADRKGTEELYAIKILKKDVVIQDDDVECTMVEKRVLALLDKPPFLTQLHSCFQTVDRLYFVMEYVNGGDLMYHIQQVGKFKEPQAVFYAAEISIGLFFLHKRGIIYRDLKLDNVMLDSEGHIKIADFGMCKEHMMDGVTTRTFCGTPDYIAPEIIAYQPYGKSVDWWAYGVLLYEMLAGQPPFDGEDEDELFQSIMEHNVSYPKSLSKEAVSVCKGLMTKHPAKRLGCGPEGERDVREHAFFRRIDWEKLENREIQPPFKPKVCGKGAENFDKFFTRGQPVLTPPDQLVIANIDQSDFEGFSYVNPQFVHPILQSAV</sequence>
<feature type="initiator methionine" description="Removed" evidence="12 46 50">
    <location>
        <position position="1"/>
    </location>
</feature>
<feature type="chain" id="PRO_0000055679" description="Protein kinase C alpha type">
    <location>
        <begin position="2"/>
        <end position="672"/>
    </location>
</feature>
<feature type="domain" description="C2" evidence="5">
    <location>
        <begin position="158"/>
        <end position="275"/>
    </location>
</feature>
<feature type="domain" description="Protein kinase" evidence="6">
    <location>
        <begin position="339"/>
        <end position="597"/>
    </location>
</feature>
<feature type="domain" description="AGC-kinase C-terminal" evidence="8">
    <location>
        <begin position="598"/>
        <end position="668"/>
    </location>
</feature>
<feature type="zinc finger region" description="Phorbol-ester/DAG-type 1" evidence="7">
    <location>
        <begin position="36"/>
        <end position="86"/>
    </location>
</feature>
<feature type="zinc finger region" description="Phorbol-ester/DAG-type 2" evidence="7">
    <location>
        <begin position="101"/>
        <end position="151"/>
    </location>
</feature>
<feature type="active site" description="Proton acceptor" evidence="6 9">
    <location>
        <position position="463"/>
    </location>
</feature>
<feature type="binding site" evidence="2">
    <location>
        <position position="186"/>
    </location>
    <ligand>
        <name>Ca(2+)</name>
        <dbReference type="ChEBI" id="CHEBI:29108"/>
        <label>1</label>
    </ligand>
</feature>
<feature type="binding site" evidence="2">
    <location>
        <position position="187"/>
    </location>
    <ligand>
        <name>Ca(2+)</name>
        <dbReference type="ChEBI" id="CHEBI:29108"/>
        <label>1</label>
    </ligand>
</feature>
<feature type="binding site" evidence="2">
    <location>
        <position position="187"/>
    </location>
    <ligand>
        <name>Ca(2+)</name>
        <dbReference type="ChEBI" id="CHEBI:29108"/>
        <label>2</label>
    </ligand>
</feature>
<feature type="binding site" evidence="2">
    <location>
        <position position="193"/>
    </location>
    <ligand>
        <name>Ca(2+)</name>
        <dbReference type="ChEBI" id="CHEBI:29108"/>
        <label>2</label>
    </ligand>
</feature>
<feature type="binding site" evidence="2">
    <location>
        <position position="195"/>
    </location>
    <ligand>
        <name>a 1,2-diacyl-sn-glycero-3-phospho-(1D-myo-inositol-4,5-bisphosphate)</name>
        <dbReference type="ChEBI" id="CHEBI:58456"/>
    </ligand>
</feature>
<feature type="binding site" evidence="2">
    <location>
        <position position="245"/>
    </location>
    <ligand>
        <name>a 1,2-diacyl-sn-glycero-3-phospho-(1D-myo-inositol-4,5-bisphosphate)</name>
        <dbReference type="ChEBI" id="CHEBI:58456"/>
    </ligand>
</feature>
<feature type="binding site" evidence="2">
    <location>
        <position position="246"/>
    </location>
    <ligand>
        <name>Ca(2+)</name>
        <dbReference type="ChEBI" id="CHEBI:29108"/>
        <label>1</label>
    </ligand>
</feature>
<feature type="binding site" evidence="2">
    <location>
        <position position="246"/>
    </location>
    <ligand>
        <name>Ca(2+)</name>
        <dbReference type="ChEBI" id="CHEBI:29108"/>
        <label>2</label>
    </ligand>
</feature>
<feature type="binding site" evidence="2">
    <location>
        <position position="247"/>
    </location>
    <ligand>
        <name>Ca(2+)</name>
        <dbReference type="ChEBI" id="CHEBI:29108"/>
        <label>2</label>
    </ligand>
</feature>
<feature type="binding site" evidence="2">
    <location>
        <position position="248"/>
    </location>
    <ligand>
        <name>Ca(2+)</name>
        <dbReference type="ChEBI" id="CHEBI:29108"/>
        <label>1</label>
    </ligand>
</feature>
<feature type="binding site" evidence="2">
    <location>
        <position position="248"/>
    </location>
    <ligand>
        <name>Ca(2+)</name>
        <dbReference type="ChEBI" id="CHEBI:29108"/>
        <label>2</label>
    </ligand>
</feature>
<feature type="binding site" evidence="2">
    <location>
        <position position="248"/>
    </location>
    <ligand>
        <name>Ca(2+)</name>
        <dbReference type="ChEBI" id="CHEBI:29108"/>
        <label>3</label>
    </ligand>
</feature>
<feature type="binding site" evidence="2">
    <location>
        <position position="252"/>
    </location>
    <ligand>
        <name>Ca(2+)</name>
        <dbReference type="ChEBI" id="CHEBI:29108"/>
        <label>3</label>
    </ligand>
</feature>
<feature type="binding site" evidence="2">
    <location>
        <position position="254"/>
    </location>
    <ligand>
        <name>Ca(2+)</name>
        <dbReference type="ChEBI" id="CHEBI:29108"/>
        <label>1</label>
    </ligand>
</feature>
<feature type="binding site" evidence="2">
    <location>
        <position position="254"/>
    </location>
    <ligand>
        <name>Ca(2+)</name>
        <dbReference type="ChEBI" id="CHEBI:29108"/>
        <label>3</label>
    </ligand>
</feature>
<feature type="binding site" evidence="6">
    <location>
        <begin position="345"/>
        <end position="353"/>
    </location>
    <ligand>
        <name>ATP</name>
        <dbReference type="ChEBI" id="CHEBI:30616"/>
    </ligand>
</feature>
<feature type="binding site" evidence="6 40">
    <location>
        <position position="368"/>
    </location>
    <ligand>
        <name>ATP</name>
        <dbReference type="ChEBI" id="CHEBI:30616"/>
    </ligand>
</feature>
<feature type="modified residue" description="N-acetylalanine" evidence="46 50">
    <location>
        <position position="2"/>
    </location>
</feature>
<feature type="modified residue" description="Phosphoserine" evidence="51">
    <location>
        <position position="10"/>
    </location>
</feature>
<feature type="modified residue" description="Phosphoserine" evidence="44 48 49 51 52">
    <location>
        <position position="226"/>
    </location>
</feature>
<feature type="modified residue" description="Phosphoserine" evidence="2">
    <location>
        <position position="319"/>
    </location>
</feature>
<feature type="modified residue" description="Phosphothreonine" evidence="1">
    <location>
        <position position="494"/>
    </location>
</feature>
<feature type="modified residue" description="Phosphothreonine" evidence="1">
    <location>
        <position position="495"/>
    </location>
</feature>
<feature type="modified residue" description="Phosphothreonine; by PDPK1" evidence="1 39">
    <location>
        <position position="497"/>
    </location>
</feature>
<feature type="modified residue" description="Phosphothreonine" evidence="3">
    <location>
        <position position="501"/>
    </location>
</feature>
<feature type="modified residue" description="N6-acetyllysine" evidence="47">
    <location>
        <position position="628"/>
    </location>
</feature>
<feature type="modified residue" description="Phosphothreonine" evidence="4">
    <location>
        <position position="631"/>
    </location>
</feature>
<feature type="modified residue" description="Phosphothreonine; by autocatalysis" evidence="45 49 52">
    <location>
        <position position="638"/>
    </location>
</feature>
<feature type="modified residue" description="Phosphoserine" evidence="45">
    <location>
        <position position="651"/>
    </location>
</feature>
<feature type="modified residue" description="Phosphoserine; by MTOR" evidence="27 52">
    <location>
        <position position="657"/>
    </location>
</feature>
<feature type="modified residue" description="Phosphotyrosine; by SYK" evidence="4">
    <location>
        <position position="658"/>
    </location>
</feature>
<feature type="sequence variant" id="VAR_042301" description="In a colorectal adenocarcinoma sample; somatic mutation." evidence="21">
    <original>P</original>
    <variation>S</variation>
    <location>
        <position position="98"/>
    </location>
</feature>
<feature type="sequence variant" id="VAR_042302" description="In a glioblastoma multiforme sample; somatic mutation." evidence="21">
    <original>D</original>
    <variation>N</variation>
    <location>
        <position position="467"/>
    </location>
</feature>
<feature type="sequence variant" id="VAR_042303" description="In dbSNP:rs34406842." evidence="21">
    <original>M</original>
    <variation>V</variation>
    <location>
        <position position="489"/>
    </location>
</feature>
<feature type="sequence variant" id="VAR_050558" description="In dbSNP:rs6504459." evidence="18 24 28 38">
    <original>V</original>
    <variation>I</variation>
    <location>
        <position position="568"/>
    </location>
</feature>
<feature type="mutagenesis site" description="Abolished protein kinase activity." evidence="27">
    <original>K</original>
    <variation>M</variation>
    <location>
        <position position="368"/>
    </location>
</feature>
<feature type="sequence conflict" description="In Ref. 6; AAA60098." evidence="39" ref="6">
    <original>C</original>
    <variation>S</variation>
    <location>
        <position position="50"/>
    </location>
</feature>
<feature type="turn" evidence="53">
    <location>
        <begin position="98"/>
        <end position="100"/>
    </location>
</feature>
<feature type="strand" evidence="53">
    <location>
        <begin position="105"/>
        <end position="107"/>
    </location>
</feature>
<feature type="strand" evidence="53">
    <location>
        <begin position="116"/>
        <end position="118"/>
    </location>
</feature>
<feature type="strand" evidence="53">
    <location>
        <begin position="125"/>
        <end position="127"/>
    </location>
</feature>
<feature type="strand" evidence="53">
    <location>
        <begin position="129"/>
        <end position="131"/>
    </location>
</feature>
<feature type="strand" evidence="53">
    <location>
        <begin position="133"/>
        <end position="135"/>
    </location>
</feature>
<feature type="strand" evidence="53">
    <location>
        <begin position="138"/>
        <end position="140"/>
    </location>
</feature>
<feature type="turn" evidence="53">
    <location>
        <begin position="141"/>
        <end position="146"/>
    </location>
</feature>
<feature type="strand" evidence="55">
    <location>
        <begin position="161"/>
        <end position="169"/>
    </location>
</feature>
<feature type="strand" evidence="55">
    <location>
        <begin position="172"/>
        <end position="182"/>
    </location>
</feature>
<feature type="strand" evidence="55">
    <location>
        <begin position="194"/>
        <end position="202"/>
    </location>
</feature>
<feature type="strand" evidence="55">
    <location>
        <begin position="222"/>
        <end position="230"/>
    </location>
</feature>
<feature type="helix" evidence="55">
    <location>
        <begin position="233"/>
        <end position="237"/>
    </location>
</feature>
<feature type="strand" evidence="55">
    <location>
        <begin position="239"/>
        <end position="246"/>
    </location>
</feature>
<feature type="strand" evidence="55">
    <location>
        <begin position="249"/>
        <end position="251"/>
    </location>
</feature>
<feature type="strand" evidence="55">
    <location>
        <begin position="254"/>
        <end position="262"/>
    </location>
</feature>
<feature type="helix" evidence="55">
    <location>
        <begin position="263"/>
        <end position="268"/>
    </location>
</feature>
<feature type="strand" evidence="55">
    <location>
        <begin position="271"/>
        <end position="276"/>
    </location>
</feature>
<feature type="helix" evidence="55">
    <location>
        <begin position="282"/>
        <end position="284"/>
    </location>
</feature>
<feature type="helix" evidence="57">
    <location>
        <begin position="336"/>
        <end position="338"/>
    </location>
</feature>
<feature type="strand" evidence="57">
    <location>
        <begin position="339"/>
        <end position="348"/>
    </location>
</feature>
<feature type="strand" evidence="57">
    <location>
        <begin position="351"/>
        <end position="358"/>
    </location>
</feature>
<feature type="strand" evidence="57">
    <location>
        <begin position="364"/>
        <end position="371"/>
    </location>
</feature>
<feature type="helix" evidence="57">
    <location>
        <begin position="372"/>
        <end position="378"/>
    </location>
</feature>
<feature type="helix" evidence="57">
    <location>
        <begin position="381"/>
        <end position="392"/>
    </location>
</feature>
<feature type="strand" evidence="57">
    <location>
        <begin position="403"/>
        <end position="408"/>
    </location>
</feature>
<feature type="strand" evidence="57">
    <location>
        <begin position="410"/>
        <end position="418"/>
    </location>
</feature>
<feature type="strand" evidence="54">
    <location>
        <begin position="422"/>
        <end position="424"/>
    </location>
</feature>
<feature type="helix" evidence="57">
    <location>
        <begin position="425"/>
        <end position="430"/>
    </location>
</feature>
<feature type="helix" evidence="57">
    <location>
        <begin position="437"/>
        <end position="456"/>
    </location>
</feature>
<feature type="helix" evidence="56">
    <location>
        <begin position="466"/>
        <end position="468"/>
    </location>
</feature>
<feature type="strand" evidence="57">
    <location>
        <begin position="469"/>
        <end position="471"/>
    </location>
</feature>
<feature type="strand" evidence="57">
    <location>
        <begin position="477"/>
        <end position="479"/>
    </location>
</feature>
<feature type="helix" evidence="57">
    <location>
        <begin position="502"/>
        <end position="504"/>
    </location>
</feature>
<feature type="helix" evidence="57">
    <location>
        <begin position="507"/>
        <end position="510"/>
    </location>
</feature>
<feature type="helix" evidence="57">
    <location>
        <begin position="518"/>
        <end position="533"/>
    </location>
</feature>
<feature type="helix" evidence="57">
    <location>
        <begin position="543"/>
        <end position="552"/>
    </location>
</feature>
<feature type="helix" evidence="57">
    <location>
        <begin position="563"/>
        <end position="572"/>
    </location>
</feature>
<feature type="helix" evidence="57">
    <location>
        <begin position="577"/>
        <end position="579"/>
    </location>
</feature>
<feature type="helix" evidence="57">
    <location>
        <begin position="587"/>
        <end position="592"/>
    </location>
</feature>
<feature type="helix" evidence="57">
    <location>
        <begin position="595"/>
        <end position="597"/>
    </location>
</feature>
<feature type="helix" evidence="57">
    <location>
        <begin position="602"/>
        <end position="606"/>
    </location>
</feature>
<feature type="helix" evidence="57">
    <location>
        <begin position="642"/>
        <end position="645"/>
    </location>
</feature>
<feature type="helix" evidence="57">
    <location>
        <begin position="650"/>
        <end position="653"/>
    </location>
</feature>
<organism>
    <name type="scientific">Homo sapiens</name>
    <name type="common">Human</name>
    <dbReference type="NCBI Taxonomy" id="9606"/>
    <lineage>
        <taxon>Eukaryota</taxon>
        <taxon>Metazoa</taxon>
        <taxon>Chordata</taxon>
        <taxon>Craniata</taxon>
        <taxon>Vertebrata</taxon>
        <taxon>Euteleostomi</taxon>
        <taxon>Mammalia</taxon>
        <taxon>Eutheria</taxon>
        <taxon>Euarchontoglires</taxon>
        <taxon>Primates</taxon>
        <taxon>Haplorrhini</taxon>
        <taxon>Catarrhini</taxon>
        <taxon>Hominidae</taxon>
        <taxon>Homo</taxon>
    </lineage>
</organism>
<reference key="1">
    <citation type="journal article" date="1990" name="Nucleic Acids Res.">
        <title>Sequence of human protein kinase C alpha.</title>
        <authorList>
            <person name="Finkenzeller G."/>
            <person name="Marme D."/>
            <person name="Hug H."/>
        </authorList>
    </citation>
    <scope>NUCLEOTIDE SEQUENCE [MRNA]</scope>
    <scope>VARIANT ILE-568</scope>
    <source>
        <tissue>Blood</tissue>
    </source>
</reference>
<reference key="2">
    <citation type="journal article" date="2008" name="Nat. Methods">
        <title>Human protein factory for converting the transcriptome into an in vitro-expressed proteome.</title>
        <authorList>
            <person name="Goshima N."/>
            <person name="Kawamura Y."/>
            <person name="Fukumoto A."/>
            <person name="Miura A."/>
            <person name="Honma R."/>
            <person name="Satoh R."/>
            <person name="Wakamatsu A."/>
            <person name="Yamamoto J."/>
            <person name="Kimura K."/>
            <person name="Nishikawa T."/>
            <person name="Andoh T."/>
            <person name="Iida Y."/>
            <person name="Ishikawa K."/>
            <person name="Ito E."/>
            <person name="Kagawa N."/>
            <person name="Kaminaga C."/>
            <person name="Kanehori K."/>
            <person name="Kawakami B."/>
            <person name="Kenmochi K."/>
            <person name="Kimura R."/>
            <person name="Kobayashi M."/>
            <person name="Kuroita T."/>
            <person name="Kuwayama H."/>
            <person name="Maruyama Y."/>
            <person name="Matsuo K."/>
            <person name="Minami K."/>
            <person name="Mitsubori M."/>
            <person name="Mori M."/>
            <person name="Morishita R."/>
            <person name="Murase A."/>
            <person name="Nishikawa A."/>
            <person name="Nishikawa S."/>
            <person name="Okamoto T."/>
            <person name="Sakagami N."/>
            <person name="Sakamoto Y."/>
            <person name="Sasaki Y."/>
            <person name="Seki T."/>
            <person name="Sono S."/>
            <person name="Sugiyama A."/>
            <person name="Sumiya T."/>
            <person name="Takayama T."/>
            <person name="Takayama Y."/>
            <person name="Takeda H."/>
            <person name="Togashi T."/>
            <person name="Yahata K."/>
            <person name="Yamada H."/>
            <person name="Yanagisawa Y."/>
            <person name="Endo Y."/>
            <person name="Imamoto F."/>
            <person name="Kisu Y."/>
            <person name="Tanaka S."/>
            <person name="Isogai T."/>
            <person name="Imai J."/>
            <person name="Watanabe S."/>
            <person name="Nomura N."/>
        </authorList>
    </citation>
    <scope>NUCLEOTIDE SEQUENCE [LARGE SCALE MRNA]</scope>
    <scope>VARIANT ILE-568</scope>
</reference>
<reference key="3">
    <citation type="journal article" date="2006" name="Nature">
        <title>DNA sequence of human chromosome 17 and analysis of rearrangement in the human lineage.</title>
        <authorList>
            <person name="Zody M.C."/>
            <person name="Garber M."/>
            <person name="Adams D.J."/>
            <person name="Sharpe T."/>
            <person name="Harrow J."/>
            <person name="Lupski J.R."/>
            <person name="Nicholson C."/>
            <person name="Searle S.M."/>
            <person name="Wilming L."/>
            <person name="Young S.K."/>
            <person name="Abouelleil A."/>
            <person name="Allen N.R."/>
            <person name="Bi W."/>
            <person name="Bloom T."/>
            <person name="Borowsky M.L."/>
            <person name="Bugalter B.E."/>
            <person name="Butler J."/>
            <person name="Chang J.L."/>
            <person name="Chen C.-K."/>
            <person name="Cook A."/>
            <person name="Corum B."/>
            <person name="Cuomo C.A."/>
            <person name="de Jong P.J."/>
            <person name="DeCaprio D."/>
            <person name="Dewar K."/>
            <person name="FitzGerald M."/>
            <person name="Gilbert J."/>
            <person name="Gibson R."/>
            <person name="Gnerre S."/>
            <person name="Goldstein S."/>
            <person name="Grafham D.V."/>
            <person name="Grocock R."/>
            <person name="Hafez N."/>
            <person name="Hagopian D.S."/>
            <person name="Hart E."/>
            <person name="Norman C.H."/>
            <person name="Humphray S."/>
            <person name="Jaffe D.B."/>
            <person name="Jones M."/>
            <person name="Kamal M."/>
            <person name="Khodiyar V.K."/>
            <person name="LaButti K."/>
            <person name="Laird G."/>
            <person name="Lehoczky J."/>
            <person name="Liu X."/>
            <person name="Lokyitsang T."/>
            <person name="Loveland J."/>
            <person name="Lui A."/>
            <person name="Macdonald P."/>
            <person name="Major J.E."/>
            <person name="Matthews L."/>
            <person name="Mauceli E."/>
            <person name="McCarroll S.A."/>
            <person name="Mihalev A.H."/>
            <person name="Mudge J."/>
            <person name="Nguyen C."/>
            <person name="Nicol R."/>
            <person name="O'Leary S.B."/>
            <person name="Osoegawa K."/>
            <person name="Schwartz D.C."/>
            <person name="Shaw-Smith C."/>
            <person name="Stankiewicz P."/>
            <person name="Steward C."/>
            <person name="Swarbreck D."/>
            <person name="Venkataraman V."/>
            <person name="Whittaker C.A."/>
            <person name="Yang X."/>
            <person name="Zimmer A.R."/>
            <person name="Bradley A."/>
            <person name="Hubbard T."/>
            <person name="Birren B.W."/>
            <person name="Rogers J."/>
            <person name="Lander E.S."/>
            <person name="Nusbaum C."/>
        </authorList>
    </citation>
    <scope>NUCLEOTIDE SEQUENCE [LARGE SCALE GENOMIC DNA]</scope>
</reference>
<reference key="4">
    <citation type="submission" date="2005-07" db="EMBL/GenBank/DDBJ databases">
        <authorList>
            <person name="Mural R.J."/>
            <person name="Istrail S."/>
            <person name="Sutton G."/>
            <person name="Florea L."/>
            <person name="Halpern A.L."/>
            <person name="Mobarry C.M."/>
            <person name="Lippert R."/>
            <person name="Walenz B."/>
            <person name="Shatkay H."/>
            <person name="Dew I."/>
            <person name="Miller J.R."/>
            <person name="Flanigan M.J."/>
            <person name="Edwards N.J."/>
            <person name="Bolanos R."/>
            <person name="Fasulo D."/>
            <person name="Halldorsson B.V."/>
            <person name="Hannenhalli S."/>
            <person name="Turner R."/>
            <person name="Yooseph S."/>
            <person name="Lu F."/>
            <person name="Nusskern D.R."/>
            <person name="Shue B.C."/>
            <person name="Zheng X.H."/>
            <person name="Zhong F."/>
            <person name="Delcher A.L."/>
            <person name="Huson D.H."/>
            <person name="Kravitz S.A."/>
            <person name="Mouchard L."/>
            <person name="Reinert K."/>
            <person name="Remington K.A."/>
            <person name="Clark A.G."/>
            <person name="Waterman M.S."/>
            <person name="Eichler E.E."/>
            <person name="Adams M.D."/>
            <person name="Hunkapiller M.W."/>
            <person name="Myers E.W."/>
            <person name="Venter J.C."/>
        </authorList>
    </citation>
    <scope>NUCLEOTIDE SEQUENCE [LARGE SCALE GENOMIC DNA]</scope>
    <scope>VARIANT ILE-568</scope>
</reference>
<reference key="5">
    <citation type="journal article" date="2004" name="Genome Res.">
        <title>The status, quality, and expansion of the NIH full-length cDNA project: the Mammalian Gene Collection (MGC).</title>
        <authorList>
            <consortium name="The MGC Project Team"/>
        </authorList>
    </citation>
    <scope>NUCLEOTIDE SEQUENCE [LARGE SCALE MRNA]</scope>
    <scope>VARIANT ILE-568</scope>
</reference>
<reference key="6">
    <citation type="journal article" date="1991" name="J. Biol. Chem.">
        <title>Phorbol diester-induced alterations in the expression of protein kinase C isozymes and their mRNAs. Analysis in wild-type and phorbol diester-resistant HL-60 cell clones.</title>
        <authorList>
            <person name="McSwine-Kennick R.L."/>
            <person name="McKeegan E.M."/>
            <person name="Johnson M.D."/>
            <person name="Morin M.J."/>
        </authorList>
    </citation>
    <scope>NUCLEOTIDE SEQUENCE [MRNA] OF 15-445</scope>
</reference>
<reference key="7">
    <citation type="submission" date="2001-06" db="EMBL/GenBank/DDBJ databases">
        <title>Homo sapiens protein kinase C alpha 5-flanking sequence.</title>
        <authorList>
            <person name="Haridasse V."/>
            <person name="Hackenbruck J."/>
            <person name="Glazer R.I."/>
        </authorList>
    </citation>
    <scope>NUCLEOTIDE SEQUENCE [GENOMIC DNA] OF 1-57</scope>
</reference>
<reference key="8">
    <citation type="journal article" date="2003" name="Nat. Biotechnol.">
        <title>Exploring proteomes and analyzing protein processing by mass spectrometric identification of sorted N-terminal peptides.</title>
        <authorList>
            <person name="Gevaert K."/>
            <person name="Goethals M."/>
            <person name="Martens L."/>
            <person name="Van Damme J."/>
            <person name="Staes A."/>
            <person name="Thomas G.R."/>
            <person name="Vandekerckhove J."/>
        </authorList>
    </citation>
    <scope>PROTEIN SEQUENCE OF 2-19</scope>
    <source>
        <tissue>Platelet</tissue>
    </source>
</reference>
<reference key="9">
    <citation type="journal article" date="1998" name="J. Biol. Chem.">
        <title>A functional role for mitochondrial protein kinase Calpha in Bcl2 phosphorylation and suppression of apoptosis.</title>
        <authorList>
            <person name="Ruvolo P.P."/>
            <person name="Deng X."/>
            <person name="Carr B.K."/>
            <person name="May W.S."/>
        </authorList>
    </citation>
    <scope>FUNCTION IN APOPTOSIS</scope>
    <scope>SUBCELLULAR LOCATION</scope>
</reference>
<reference key="10">
    <citation type="journal article" date="1998" name="J. Biol. Chem.">
        <title>Protein kinase C-alpha modulates lipopolysaccharide-induced functions in a murine macrophage cell line.</title>
        <authorList>
            <person name="St-Denis A."/>
            <person name="Chano F."/>
            <person name="Tremblay P."/>
            <person name="St-Pierre Y."/>
            <person name="Descoteaux A."/>
        </authorList>
    </citation>
    <scope>FUNCTION IN INFLAMMATORY RESPONSE</scope>
</reference>
<reference key="11">
    <citation type="journal article" date="1999" name="J. Biol. Chem.">
        <title>Interleukin-1-induced nuclear factor-kappaB-IkappaBalpha autoregulatory feedback loop in hepatocytes. A role for protein kinase calpha in post-transcriptional regulation of ikappabalpha resynthesis.</title>
        <authorList>
            <person name="Han Y."/>
            <person name="Meng T."/>
            <person name="Murray N.R."/>
            <person name="Fields A.P."/>
            <person name="Brasier A.R."/>
        </authorList>
    </citation>
    <scope>FUNCTION IN INFLAMMATORY RESPONSE</scope>
</reference>
<reference key="12">
    <citation type="journal article" date="1999" name="Mol. Pharmacol.">
        <title>Induction of p53-dependent, insulin-like growth factor-binding protein-3-mediated apoptosis in glioblastoma multiforme cells by a protein kinase Calpha antisense oligonucleotide.</title>
        <authorList>
            <person name="Shen L."/>
            <person name="Dean N.M."/>
            <person name="Glazer R.I."/>
        </authorList>
    </citation>
    <scope>FUNCTION IN APOPTOSIS</scope>
</reference>
<reference key="13">
    <citation type="journal article" date="2000" name="Mol. Cell. Biol.">
        <title>Involvement of p21(Waf1/Cip1) in protein kinase C alpha-induced cell cycle progression.</title>
        <authorList>
            <person name="Besson A."/>
            <person name="Yong V.W."/>
        </authorList>
    </citation>
    <scope>FUNCTION IN CELL CYCLE PROGRESSION</scope>
</reference>
<reference key="14">
    <citation type="journal article" date="2002" name="Circ. Res.">
        <title>Inhibition of protein kinase Calpha prevents endothelial cell migration and vascular tube formation in vitro and myocardial neovascularization in vivo.</title>
        <authorList>
            <person name="Wang A."/>
            <person name="Nomura M."/>
            <person name="Patan S."/>
            <person name="Ware J.A."/>
        </authorList>
    </citation>
    <scope>FUNCTION IN ANGIOGENESIS</scope>
</reference>
<reference key="15">
    <citation type="journal article" date="2003" name="Biochem. Biophys. Res. Commun.">
        <title>Centaurin-alpha(1) associates with and is phosphorylated by isoforms of protein kinase C.</title>
        <authorList>
            <person name="Zemlickova E."/>
            <person name="Dubois T."/>
            <person name="Kerai P."/>
            <person name="Clokie S."/>
            <person name="Cronshaw A.D."/>
            <person name="Wakefield R.I.D."/>
            <person name="Johannes F.-J."/>
            <person name="Aitken A."/>
        </authorList>
    </citation>
    <scope>INTERACTION WITH ADAP1</scope>
</reference>
<reference key="16">
    <citation type="journal article" date="2003" name="J. Biol. Chem.">
        <title>Direct demonstration of involvement of protein kinase Calpha in the Ca2+-induced platelet aggregation.</title>
        <authorList>
            <person name="Tabuchi A."/>
            <person name="Yoshioka A."/>
            <person name="Higashi T."/>
            <person name="Shirakawa R."/>
            <person name="Nishioka H."/>
            <person name="Kita T."/>
            <person name="Horiuchi H."/>
        </authorList>
    </citation>
    <scope>FUNCTION IN PLATELET AGGREGATION</scope>
</reference>
<reference key="17">
    <citation type="journal article" date="2003" name="J. Biol. Chem.">
        <title>Identification of a functionally critical protein kinase C phosphorylation residue of cardiac troponin T.</title>
        <authorList>
            <person name="Sumandea M.P."/>
            <person name="Pyle W.G."/>
            <person name="Kobayashi T."/>
            <person name="de Tombe P.P."/>
            <person name="Solaro R.J."/>
        </authorList>
    </citation>
    <scope>FUNCTION IN PHOSPHORYLATION OF TNNT2/CTNT</scope>
</reference>
<reference key="18">
    <citation type="journal article" date="2004" name="Cell. Mol. Life Sci.">
        <title>Signal transduction via the stem cell factor receptor/c-Kit.</title>
        <authorList>
            <person name="Ronnstrand L."/>
        </authorList>
    </citation>
    <scope>FUNCTION IN KIT SIGNALING</scope>
</reference>
<reference key="19">
    <citation type="journal article" date="2004" name="J. Biol. Chem.">
        <title>Protein kinase Calpha phosphorylates the TRPC1 channel and regulates store-operated Ca2+ entry in endothelial cells.</title>
        <authorList>
            <person name="Ahmmed G.U."/>
            <person name="Mehta D."/>
            <person name="Vogel S."/>
            <person name="Holinstat M."/>
            <person name="Paria B.C."/>
            <person name="Tiruppathi C."/>
            <person name="Malik A.B."/>
        </authorList>
    </citation>
    <scope>FUNCTION IN PHOSPHORYLATION OF TRPC1</scope>
</reference>
<reference key="20">
    <citation type="journal article" date="2004" name="J. Biol. Chem.">
        <title>The PDZ domain of PICK1 differentially accepts protein kinase C-alpha and GluR2 as interacting ligands.</title>
        <authorList>
            <person name="Dev K.K."/>
            <person name="Nakanishi S."/>
            <person name="Henley J.M."/>
        </authorList>
    </citation>
    <scope>INTERACTION WITH PICK1</scope>
</reference>
<reference key="21">
    <citation type="journal article" date="2004" name="J. Biol. Chem.">
        <title>Phosphorylation of NG2 proteoglycan by protein kinase C-alpha regulates polarized membrane distribution and cell motility.</title>
        <authorList>
            <person name="Makagiansar I.T."/>
            <person name="Williams S."/>
            <person name="Dahlin-Huppe K."/>
            <person name="Fukushi J."/>
            <person name="Mustelin T."/>
            <person name="Stallcup W.B."/>
        </authorList>
    </citation>
    <scope>FUNCTION IN PHOSPHORYLATION OF CSPG4</scope>
    <scope>INTERACTION WITH CSPG4</scope>
</reference>
<reference key="22">
    <citation type="journal article" date="2005" name="Biochem. Biophys. Res. Commun.">
        <title>Signaling by Kit protein-tyrosine kinase--the stem cell factor receptor.</title>
        <authorList>
            <person name="Roskoski R. Jr."/>
        </authorList>
    </citation>
    <scope>REVIEW ON ROLE IN KIT SIGNALING</scope>
</reference>
<reference key="23">
    <citation type="journal article" date="2006" name="Cell">
        <title>Global, in vivo, and site-specific phosphorylation dynamics in signaling networks.</title>
        <authorList>
            <person name="Olsen J.V."/>
            <person name="Blagoev B."/>
            <person name="Gnad F."/>
            <person name="Macek B."/>
            <person name="Kumar C."/>
            <person name="Mortensen P."/>
            <person name="Mann M."/>
        </authorList>
    </citation>
    <scope>IDENTIFICATION BY MASS SPECTROMETRY [LARGE SCALE ANALYSIS]</scope>
    <source>
        <tissue>Cervix carcinoma</tissue>
    </source>
</reference>
<reference key="24">
    <citation type="journal article" date="2007" name="J. Biol. Chem.">
        <title>Amplitude control of protein kinase C by RINCK, a novel E3 ubiquitin ligase.</title>
        <authorList>
            <person name="Chen D."/>
            <person name="Gould C."/>
            <person name="Garza R."/>
            <person name="Gao T."/>
            <person name="Hampton R.Y."/>
            <person name="Newton A.C."/>
        </authorList>
    </citation>
    <scope>INTERACTION WITH TRIM41</scope>
</reference>
<reference key="25">
    <citation type="journal article" date="2008" name="Cardiovasc. Res.">
        <title>Protein kinase C alpha promotes angiogenic activity of human endothelial cells via induction of vascular endothelial growth factor.</title>
        <authorList>
            <person name="Xu H."/>
            <person name="Czerwinski P."/>
            <person name="Hortmann M."/>
            <person name="Sohn H.Y."/>
            <person name="Foerstermann U."/>
            <person name="Li H."/>
        </authorList>
    </citation>
    <scope>FUNCTION IN ANGIOGENESIS</scope>
</reference>
<reference key="26">
    <citation type="journal article" date="2008" name="J. Proteome Res.">
        <title>Phosphoproteome of resting human platelets.</title>
        <authorList>
            <person name="Zahedi R.P."/>
            <person name="Lewandrowski U."/>
            <person name="Wiesner J."/>
            <person name="Wortelkamp S."/>
            <person name="Moebius J."/>
            <person name="Schuetz C."/>
            <person name="Walter U."/>
            <person name="Gambaryan S."/>
            <person name="Sickmann A."/>
        </authorList>
    </citation>
    <scope>IDENTIFICATION BY MASS SPECTROMETRY [LARGE SCALE ANALYSIS]</scope>
    <source>
        <tissue>Platelet</tissue>
    </source>
</reference>
<reference key="27">
    <citation type="journal article" date="2008" name="Mol. Cell">
        <title>Kinase-selective enrichment enables quantitative phosphoproteomics of the kinome across the cell cycle.</title>
        <authorList>
            <person name="Daub H."/>
            <person name="Olsen J.V."/>
            <person name="Bairlein M."/>
            <person name="Gnad F."/>
            <person name="Oppermann F.S."/>
            <person name="Korner R."/>
            <person name="Greff Z."/>
            <person name="Keri G."/>
            <person name="Stemmann O."/>
            <person name="Mann M."/>
        </authorList>
    </citation>
    <scope>PHOSPHORYLATION [LARGE SCALE ANALYSIS] AT THR-638 AND SER-651</scope>
    <scope>IDENTIFICATION BY MASS SPECTROMETRY [LARGE SCALE ANALYSIS]</scope>
    <source>
        <tissue>Cervix carcinoma</tissue>
    </source>
</reference>
<reference key="28">
    <citation type="journal article" date="2008" name="Proc. Natl. Acad. Sci. U.S.A.">
        <title>A quantitative atlas of mitotic phosphorylation.</title>
        <authorList>
            <person name="Dephoure N."/>
            <person name="Zhou C."/>
            <person name="Villen J."/>
            <person name="Beausoleil S.A."/>
            <person name="Bakalarski C.E."/>
            <person name="Elledge S.J."/>
            <person name="Gygi S.P."/>
        </authorList>
    </citation>
    <scope>PHOSPHORYLATION [LARGE SCALE ANALYSIS] AT SER-226</scope>
    <scope>IDENTIFICATION BY MASS SPECTROMETRY [LARGE SCALE ANALYSIS]</scope>
    <source>
        <tissue>Cervix carcinoma</tissue>
    </source>
</reference>
<reference key="29">
    <citation type="journal article" date="2009" name="Anal. Chem.">
        <title>Lys-N and trypsin cover complementary parts of the phosphoproteome in a refined SCX-based approach.</title>
        <authorList>
            <person name="Gauci S."/>
            <person name="Helbig A.O."/>
            <person name="Slijper M."/>
            <person name="Krijgsveld J."/>
            <person name="Heck A.J."/>
            <person name="Mohammed S."/>
        </authorList>
    </citation>
    <scope>ACETYLATION [LARGE SCALE ANALYSIS] AT ALA-2</scope>
    <scope>CLEAVAGE OF INITIATOR METHIONINE [LARGE SCALE ANALYSIS]</scope>
    <scope>IDENTIFICATION BY MASS SPECTROMETRY [LARGE SCALE ANALYSIS]</scope>
</reference>
<reference key="30">
    <citation type="journal article" date="2009" name="J. Biol. Chem.">
        <title>Phosphorylation of activation transcription factor-2 at serine 121 by protein kinase c controls c-Jun-mediated activation of transcription.</title>
        <authorList>
            <person name="Yamasaki T."/>
            <person name="Takahashi A."/>
            <person name="Pan J."/>
            <person name="Yamaguchi N."/>
            <person name="Yokoyama K.K."/>
        </authorList>
    </citation>
    <scope>FUNCTION</scope>
</reference>
<reference key="31">
    <citation type="journal article" date="2009" name="Sci. Signal.">
        <title>Quantitative phosphoproteomic analysis of T cell receptor signaling reveals system-wide modulation of protein-protein interactions.</title>
        <authorList>
            <person name="Mayya V."/>
            <person name="Lundgren D.H."/>
            <person name="Hwang S.-I."/>
            <person name="Rezaul K."/>
            <person name="Wu L."/>
            <person name="Eng J.K."/>
            <person name="Rodionov V."/>
            <person name="Han D.K."/>
        </authorList>
    </citation>
    <scope>PHOSPHORYLATION [LARGE SCALE ANALYSIS] AT SER-226</scope>
    <scope>IDENTIFICATION BY MASS SPECTROMETRY [LARGE SCALE ANALYSIS]</scope>
    <source>
        <tissue>Leukemic T-cell</tissue>
    </source>
</reference>
<reference key="32">
    <citation type="journal article" date="2009" name="Science">
        <title>Lysine acetylation targets protein complexes and co-regulates major cellular functions.</title>
        <authorList>
            <person name="Choudhary C."/>
            <person name="Kumar C."/>
            <person name="Gnad F."/>
            <person name="Nielsen M.L."/>
            <person name="Rehman M."/>
            <person name="Walther T.C."/>
            <person name="Olsen J.V."/>
            <person name="Mann M."/>
        </authorList>
    </citation>
    <scope>ACETYLATION [LARGE SCALE ANALYSIS] AT LYS-628</scope>
    <scope>IDENTIFICATION BY MASS SPECTROMETRY [LARGE SCALE ANALYSIS]</scope>
</reference>
<reference key="33">
    <citation type="journal article" date="2010" name="Sci. Signal.">
        <title>Quantitative phosphoproteomics reveals widespread full phosphorylation site occupancy during mitosis.</title>
        <authorList>
            <person name="Olsen J.V."/>
            <person name="Vermeulen M."/>
            <person name="Santamaria A."/>
            <person name="Kumar C."/>
            <person name="Miller M.L."/>
            <person name="Jensen L.J."/>
            <person name="Gnad F."/>
            <person name="Cox J."/>
            <person name="Jensen T.S."/>
            <person name="Nigg E.A."/>
            <person name="Brunak S."/>
            <person name="Mann M."/>
        </authorList>
    </citation>
    <scope>PHOSPHORYLATION [LARGE SCALE ANALYSIS] AT SER-226 AND THR-638</scope>
    <scope>IDENTIFICATION BY MASS SPECTROMETRY [LARGE SCALE ANALYSIS]</scope>
    <source>
        <tissue>Cervix carcinoma</tissue>
    </source>
</reference>
<reference key="34">
    <citation type="journal article" date="2011" name="Biochem. J.">
        <title>mTORC2 targets AGC kinases through Sin1-dependent recruitment.</title>
        <authorList>
            <person name="Cameron A.J."/>
            <person name="Linch M.D."/>
            <person name="Saurin A.T."/>
            <person name="Escribano C."/>
            <person name="Parker P.J."/>
        </authorList>
    </citation>
    <scope>FUNCTION</scope>
    <scope>ACTIVITY REGULATION</scope>
    <scope>PHOSPHORYLATION AT SER-657</scope>
    <scope>MUTAGENESIS OF LYS-368</scope>
</reference>
<reference key="35">
    <citation type="journal article" date="2011" name="BMC Syst. Biol.">
        <title>Initial characterization of the human central proteome.</title>
        <authorList>
            <person name="Burkard T.R."/>
            <person name="Planyavsky M."/>
            <person name="Kaupe I."/>
            <person name="Breitwieser F.P."/>
            <person name="Buerckstuemmer T."/>
            <person name="Bennett K.L."/>
            <person name="Superti-Furga G."/>
            <person name="Colinge J."/>
        </authorList>
    </citation>
    <scope>IDENTIFICATION BY MASS SPECTROMETRY [LARGE SCALE ANALYSIS]</scope>
</reference>
<reference key="36">
    <citation type="journal article" date="2011" name="Mol. Cell. Biol.">
        <title>Phosphorylation of eukaryotic translation initiation factor 4G1 (eIF4G1) by protein kinase C{alpha} regulates eIF4G1 binding to Mnk1.</title>
        <authorList>
            <person name="Dobrikov M."/>
            <person name="Dobrikova E."/>
            <person name="Shveygert M."/>
            <person name="Gromeier M."/>
        </authorList>
    </citation>
    <scope>FUNCTION IN PHOSPHORYLATION OF EIF4G1</scope>
</reference>
<reference key="37">
    <citation type="journal article" date="2002" name="J. Biochem.">
        <title>Protein kinase C alpha (PKC alpha): regulation and biological function.</title>
        <authorList>
            <person name="Nakashima S."/>
        </authorList>
    </citation>
    <scope>REVIEW ON FUNCTION</scope>
    <scope>REVIEW ON ACTIVITY REGULATION</scope>
</reference>
<reference key="38">
    <citation type="journal article" date="2010" name="Trends Pharmacol. Sci.">
        <title>Protein kinase Calpha: disease regulator and therapeutic target.</title>
        <authorList>
            <person name="Konopatskaya O."/>
            <person name="Poole A.W."/>
        </authorList>
    </citation>
    <scope>REVIEW ON FUNCTION</scope>
</reference>
<reference key="39">
    <citation type="journal article" date="2012" name="Proc. Natl. Acad. Sci. U.S.A.">
        <title>N-terminal acetylome analyses and functional insights of the N-terminal acetyltransferase NatB.</title>
        <authorList>
            <person name="Van Damme P."/>
            <person name="Lasa M."/>
            <person name="Polevoda B."/>
            <person name="Gazquez C."/>
            <person name="Elosegui-Artola A."/>
            <person name="Kim D.S."/>
            <person name="De Juan-Pardo E."/>
            <person name="Demeyer K."/>
            <person name="Hole K."/>
            <person name="Larrea E."/>
            <person name="Timmerman E."/>
            <person name="Prieto J."/>
            <person name="Arnesen T."/>
            <person name="Sherman F."/>
            <person name="Gevaert K."/>
            <person name="Aldabe R."/>
        </authorList>
    </citation>
    <scope>ACETYLATION [LARGE SCALE ANALYSIS] AT ALA-2</scope>
    <scope>CLEAVAGE OF INITIATOR METHIONINE [LARGE SCALE ANALYSIS]</scope>
    <scope>IDENTIFICATION BY MASS SPECTROMETRY [LARGE SCALE ANALYSIS]</scope>
</reference>
<reference key="40">
    <citation type="journal article" date="2013" name="J. Natl. Cancer Inst.">
        <title>Unraveling the role of KIAA1199, a novel endoplasmic reticulum protein, in cancer cell migration.</title>
        <authorList>
            <person name="Evensen N.A."/>
            <person name="Kuscu C."/>
            <person name="Nguyen H.L."/>
            <person name="Zarrabi K."/>
            <person name="Dufour A."/>
            <person name="Kadam P."/>
            <person name="Hu Y.J."/>
            <person name="Pulkoski-Gross A."/>
            <person name="Bahou W.F."/>
            <person name="Zucker S."/>
            <person name="Cao J."/>
        </authorList>
    </citation>
    <scope>FUNCTION IN CELL MIGRATION</scope>
    <scope>SUBCELLULAR LOCATION</scope>
</reference>
<reference key="41">
    <citation type="journal article" date="2013" name="J. Proteome Res.">
        <title>Toward a comprehensive characterization of a human cancer cell phosphoproteome.</title>
        <authorList>
            <person name="Zhou H."/>
            <person name="Di Palma S."/>
            <person name="Preisinger C."/>
            <person name="Peng M."/>
            <person name="Polat A.N."/>
            <person name="Heck A.J."/>
            <person name="Mohammed S."/>
        </authorList>
    </citation>
    <scope>PHOSPHORYLATION [LARGE SCALE ANALYSIS] AT SER-10 AND SER-226</scope>
    <scope>IDENTIFICATION BY MASS SPECTROMETRY [LARGE SCALE ANALYSIS]</scope>
    <source>
        <tissue>Cervix carcinoma</tissue>
        <tissue>Erythroleukemia</tissue>
    </source>
</reference>
<reference key="42">
    <citation type="journal article" date="2014" name="J. Proteomics">
        <title>An enzyme assisted RP-RPLC approach for in-depth analysis of human liver phosphoproteome.</title>
        <authorList>
            <person name="Bian Y."/>
            <person name="Song C."/>
            <person name="Cheng K."/>
            <person name="Dong M."/>
            <person name="Wang F."/>
            <person name="Huang J."/>
            <person name="Sun D."/>
            <person name="Wang L."/>
            <person name="Ye M."/>
            <person name="Zou H."/>
        </authorList>
    </citation>
    <scope>PHOSPHORYLATION [LARGE SCALE ANALYSIS] AT SER-226; THR-638 AND SER-657</scope>
    <scope>IDENTIFICATION BY MASS SPECTROMETRY [LARGE SCALE ANALYSIS]</scope>
    <source>
        <tissue>Liver</tissue>
    </source>
</reference>
<reference key="43">
    <citation type="journal article" date="2014" name="Proc. Natl. Acad. Sci. U.S.A.">
        <title>Angiotensin II signaling via protein kinase C phosphorylates Kelch-like 3, preventing WNK4 degradation.</title>
        <authorList>
            <person name="Shibata S."/>
            <person name="Arroyo J.P."/>
            <person name="Castaneda-Bueno M."/>
            <person name="Puthumana J."/>
            <person name="Zhang J."/>
            <person name="Uchida S."/>
            <person name="Stone K.L."/>
            <person name="Lam T.T."/>
            <person name="Lifton R.P."/>
        </authorList>
    </citation>
    <scope>FUNCTION</scope>
    <scope>CATALYTIC ACTIVITY</scope>
</reference>
<reference key="44">
    <citation type="journal article" date="2017" name="Hum. Mutat.">
        <title>Rare deleterious PARD3 variants in the aPKC-binding region are implicated in the pathogenesis of human cranial neural tube defects via disrupting apical tight junction formation.</title>
        <authorList>
            <person name="Chen X."/>
            <person name="An Y."/>
            <person name="Gao Y."/>
            <person name="Guo L."/>
            <person name="Rui L."/>
            <person name="Xie H."/>
            <person name="Sun M."/>
            <person name="Lam Hung S."/>
            <person name="Sheng X."/>
            <person name="Zou J."/>
            <person name="Bao Y."/>
            <person name="Guan H."/>
            <person name="Niu B."/>
            <person name="Li Z."/>
            <person name="Finnell R.H."/>
            <person name="Gusella J.F."/>
            <person name="Wu B.L."/>
            <person name="Zhang T."/>
        </authorList>
    </citation>
    <scope>INTERACTION WITH PARD3</scope>
</reference>
<reference key="45">
    <citation type="journal article" date="2017" name="J. Exp. Med.">
        <title>LRCH1 interferes with DOCK8-Cdc42-induced T cell migration and ameliorates experimental autoimmune encephalomyelitis.</title>
        <authorList>
            <person name="Xu X."/>
            <person name="Han L."/>
            <person name="Zhao G."/>
            <person name="Xue S."/>
            <person name="Gao Y."/>
            <person name="Xiao J."/>
            <person name="Zhang S."/>
            <person name="Chen P."/>
            <person name="Wu Z.Y."/>
            <person name="Ding J."/>
            <person name="Hu R."/>
            <person name="Wei B."/>
            <person name="Wang H."/>
        </authorList>
    </citation>
    <scope>FUNCTION</scope>
</reference>
<reference key="46">
    <citation type="journal article" date="2022" name="Biochem. J.">
        <title>PKC isoforms activate LRRK1 kinase by phosphorylating conserved residues (Ser1064, Ser1074 and Thr1075) within the CORB GTPase domain.</title>
        <authorList>
            <person name="Malik A.U."/>
            <person name="Karapetsas A."/>
            <person name="Nirujogi R.S."/>
            <person name="Chatterjee D."/>
            <person name="Phung T.K."/>
            <person name="Wightman M."/>
            <person name="Gourlay R."/>
            <person name="Morrice N."/>
            <person name="Mathea S."/>
            <person name="Knapp S."/>
            <person name="Alessi D.R."/>
        </authorList>
    </citation>
    <scope>FUNCTION</scope>
    <scope>CATALYTIC ACTIVITY</scope>
    <scope>SUBCELLULAR LOCATION</scope>
</reference>
<reference key="47">
    <citation type="journal article" date="2009" name="J. Med. Chem.">
        <title>Discovery of 3-(1H-indol-3-yl)-4-[2-(4-methylpiperazin-1-yl)quinazolin-4-yl]pyrrole-2,5-dione (AEB071), a potent and selective inhibitor of protein kinase C isotypes.</title>
        <authorList>
            <person name="Wagner J."/>
            <person name="von Matt P."/>
            <person name="Sedrani R."/>
            <person name="Albert R."/>
            <person name="Cooke N."/>
            <person name="Ehrhardt C."/>
            <person name="Geiser M."/>
            <person name="Rummel G."/>
            <person name="Stark W."/>
            <person name="Strauss A."/>
            <person name="Cowan-Jacob S.W."/>
            <person name="Beerli C."/>
            <person name="Weckbecker G."/>
            <person name="Evenou J.P."/>
            <person name="Zenke G."/>
            <person name="Cottens S."/>
        </authorList>
    </citation>
    <scope>X-RAY CRYSTALLOGRAPHY (2.80 ANGSTROMS) OF 320-672 IN COMPLEX WITH INHIBITOR</scope>
</reference>
<reference key="48">
    <citation type="submission" date="2008-04" db="PDB data bank">
        <title>Solution structure of the second phorbol esters/diacylglycerol binding domain of human protein kinase C alpha type.</title>
        <authorList>
            <consortium name="RIKEN structural genomics initiative (RSGI)"/>
        </authorList>
    </citation>
    <scope>STRUCTURE BY NMR OF 88-169</scope>
</reference>
<reference key="49">
    <citation type="journal article" date="2007" name="Nature">
        <title>Patterns of somatic mutation in human cancer genomes.</title>
        <authorList>
            <person name="Greenman C."/>
            <person name="Stephens P."/>
            <person name="Smith R."/>
            <person name="Dalgliesh G.L."/>
            <person name="Hunter C."/>
            <person name="Bignell G."/>
            <person name="Davies H."/>
            <person name="Teague J."/>
            <person name="Butler A."/>
            <person name="Stevens C."/>
            <person name="Edkins S."/>
            <person name="O'Meara S."/>
            <person name="Vastrik I."/>
            <person name="Schmidt E.E."/>
            <person name="Avis T."/>
            <person name="Barthorpe S."/>
            <person name="Bhamra G."/>
            <person name="Buck G."/>
            <person name="Choudhury B."/>
            <person name="Clements J."/>
            <person name="Cole J."/>
            <person name="Dicks E."/>
            <person name="Forbes S."/>
            <person name="Gray K."/>
            <person name="Halliday K."/>
            <person name="Harrison R."/>
            <person name="Hills K."/>
            <person name="Hinton J."/>
            <person name="Jenkinson A."/>
            <person name="Jones D."/>
            <person name="Menzies A."/>
            <person name="Mironenko T."/>
            <person name="Perry J."/>
            <person name="Raine K."/>
            <person name="Richardson D."/>
            <person name="Shepherd R."/>
            <person name="Small A."/>
            <person name="Tofts C."/>
            <person name="Varian J."/>
            <person name="Webb T."/>
            <person name="West S."/>
            <person name="Widaa S."/>
            <person name="Yates A."/>
            <person name="Cahill D.P."/>
            <person name="Louis D.N."/>
            <person name="Goldstraw P."/>
            <person name="Nicholson A.G."/>
            <person name="Brasseur F."/>
            <person name="Looijenga L."/>
            <person name="Weber B.L."/>
            <person name="Chiew Y.-E."/>
            <person name="DeFazio A."/>
            <person name="Greaves M.F."/>
            <person name="Green A.R."/>
            <person name="Campbell P."/>
            <person name="Birney E."/>
            <person name="Easton D.F."/>
            <person name="Chenevix-Trench G."/>
            <person name="Tan M.-H."/>
            <person name="Khoo S.K."/>
            <person name="Teh B.T."/>
            <person name="Yuen S.T."/>
            <person name="Leung S.Y."/>
            <person name="Wooster R."/>
            <person name="Futreal P.A."/>
            <person name="Stratton M.R."/>
        </authorList>
    </citation>
    <scope>VARIANTS [LARGE SCALE ANALYSIS] SER-98; ASN-467 AND VAL-489</scope>
</reference>
<evidence type="ECO:0000250" key="1">
    <source>
        <dbReference type="UniProtKB" id="P04409"/>
    </source>
</evidence>
<evidence type="ECO:0000250" key="2">
    <source>
        <dbReference type="UniProtKB" id="P05696"/>
    </source>
</evidence>
<evidence type="ECO:0000250" key="3">
    <source>
        <dbReference type="UniProtKB" id="P05771"/>
    </source>
</evidence>
<evidence type="ECO:0000250" key="4">
    <source>
        <dbReference type="UniProtKB" id="P20444"/>
    </source>
</evidence>
<evidence type="ECO:0000255" key="5">
    <source>
        <dbReference type="PROSITE-ProRule" id="PRU00041"/>
    </source>
</evidence>
<evidence type="ECO:0000255" key="6">
    <source>
        <dbReference type="PROSITE-ProRule" id="PRU00159"/>
    </source>
</evidence>
<evidence type="ECO:0000255" key="7">
    <source>
        <dbReference type="PROSITE-ProRule" id="PRU00226"/>
    </source>
</evidence>
<evidence type="ECO:0000255" key="8">
    <source>
        <dbReference type="PROSITE-ProRule" id="PRU00618"/>
    </source>
</evidence>
<evidence type="ECO:0000255" key="9">
    <source>
        <dbReference type="PROSITE-ProRule" id="PRU10027"/>
    </source>
</evidence>
<evidence type="ECO:0000269" key="10">
    <source>
    </source>
</evidence>
<evidence type="ECO:0000269" key="11">
    <source>
    </source>
</evidence>
<evidence type="ECO:0000269" key="12">
    <source>
    </source>
</evidence>
<evidence type="ECO:0000269" key="13">
    <source>
    </source>
</evidence>
<evidence type="ECO:0000269" key="14">
    <source>
    </source>
</evidence>
<evidence type="ECO:0000269" key="15">
    <source>
    </source>
</evidence>
<evidence type="ECO:0000269" key="16">
    <source>
    </source>
</evidence>
<evidence type="ECO:0000269" key="17">
    <source>
    </source>
</evidence>
<evidence type="ECO:0000269" key="18">
    <source>
    </source>
</evidence>
<evidence type="ECO:0000269" key="19">
    <source>
    </source>
</evidence>
<evidence type="ECO:0000269" key="20">
    <source>
    </source>
</evidence>
<evidence type="ECO:0000269" key="21">
    <source>
    </source>
</evidence>
<evidence type="ECO:0000269" key="22">
    <source>
    </source>
</evidence>
<evidence type="ECO:0000269" key="23">
    <source>
    </source>
</evidence>
<evidence type="ECO:0000269" key="24">
    <source>
    </source>
</evidence>
<evidence type="ECO:0000269" key="25">
    <source>
    </source>
</evidence>
<evidence type="ECO:0000269" key="26">
    <source>
    </source>
</evidence>
<evidence type="ECO:0000269" key="27">
    <source>
    </source>
</evidence>
<evidence type="ECO:0000269" key="28">
    <source>
    </source>
</evidence>
<evidence type="ECO:0000269" key="29">
    <source>
    </source>
</evidence>
<evidence type="ECO:0000269" key="30">
    <source>
    </source>
</evidence>
<evidence type="ECO:0000269" key="31">
    <source>
    </source>
</evidence>
<evidence type="ECO:0000269" key="32">
    <source>
    </source>
</evidence>
<evidence type="ECO:0000269" key="33">
    <source>
    </source>
</evidence>
<evidence type="ECO:0000269" key="34">
    <source>
    </source>
</evidence>
<evidence type="ECO:0000269" key="35">
    <source>
    </source>
</evidence>
<evidence type="ECO:0000269" key="36">
    <source>
    </source>
</evidence>
<evidence type="ECO:0000269" key="37">
    <source>
    </source>
</evidence>
<evidence type="ECO:0000269" key="38">
    <source ref="4"/>
</evidence>
<evidence type="ECO:0000305" key="39"/>
<evidence type="ECO:0000305" key="40">
    <source>
    </source>
</evidence>
<evidence type="ECO:0000305" key="41">
    <source>
    </source>
</evidence>
<evidence type="ECO:0000305" key="42">
    <source>
    </source>
</evidence>
<evidence type="ECO:0000305" key="43">
    <source>
    </source>
</evidence>
<evidence type="ECO:0007744" key="44">
    <source>
    </source>
</evidence>
<evidence type="ECO:0007744" key="45">
    <source>
    </source>
</evidence>
<evidence type="ECO:0007744" key="46">
    <source>
    </source>
</evidence>
<evidence type="ECO:0007744" key="47">
    <source>
    </source>
</evidence>
<evidence type="ECO:0007744" key="48">
    <source>
    </source>
</evidence>
<evidence type="ECO:0007744" key="49">
    <source>
    </source>
</evidence>
<evidence type="ECO:0007744" key="50">
    <source>
    </source>
</evidence>
<evidence type="ECO:0007744" key="51">
    <source>
    </source>
</evidence>
<evidence type="ECO:0007744" key="52">
    <source>
    </source>
</evidence>
<evidence type="ECO:0007829" key="53">
    <source>
        <dbReference type="PDB" id="2ELI"/>
    </source>
</evidence>
<evidence type="ECO:0007829" key="54">
    <source>
        <dbReference type="PDB" id="3IW4"/>
    </source>
</evidence>
<evidence type="ECO:0007829" key="55">
    <source>
        <dbReference type="PDB" id="4DNL"/>
    </source>
</evidence>
<evidence type="ECO:0007829" key="56">
    <source>
        <dbReference type="PDB" id="4RA4"/>
    </source>
</evidence>
<evidence type="ECO:0007829" key="57">
    <source>
        <dbReference type="PDB" id="8U37"/>
    </source>
</evidence>